<name>ILF3_HUMAN</name>
<comment type="function">
    <text evidence="11 17 20 22">RNA-binding protein that plays an essential role in the biogenesis of circular RNAs (circRNAs) which are produced by back-splicing circularization of pre-mRNAs. Within the nucleus, promotes circRNAs processing by stabilizing the regulatory elements residing in the flanking introns of the circularized exons. Plays thereby a role in the back-splicing of a subset of circRNAs (PubMed:28625552). As a consequence, participates in a wide range of transcriptional and post-transcriptional processes. Binds to poly-U elements and AU-rich elements (AREs) in the 3'-UTR of target mRNAs (PubMed:14731398). Upon viral infection, ILF3 accumulates in the cytoplasm and participates in the innate antiviral response (PubMed:21123651, PubMed:34110282). Mechanistically, ILF3 becomes phosphorylated and activated by the double-stranded RNA-activated protein kinase/PKR which releases ILF3 from cellular mature circRNAs. In turn, unbound ILF3 molecules are able to interact with and thus inhibit viral mRNAs (PubMed:21123651, PubMed:28625552).</text>
</comment>
<comment type="function">
    <text evidence="19">(Microbial infection) Plays a positive role in HIV-1 virus production by binding to and thereby stabilizing HIV-1 RNA, together with ILF3.</text>
</comment>
<comment type="subunit">
    <text evidence="5 6 8 9 10 11 12 13 14 15 16 18 20 21 22">Identified in a IGF2BP1-dependent mRNP granule complex containing untranslated mRNAs. Interacts with FUS and SMN. Interacts (via C-terminus) with PRMT1. Forms a complex with ILF2. Can also bind to PRKDC/XRCC7: this may stabilize the interaction of PRKDC/XRCC7 and the heterodimeric complex of XRCC6/KU70 and XRCC5/KU80. Forms a heteromeric complex with ZNF346 and ILF3. Found in a nuclear export complex with XPO5, ILF3, Ran and double-stranded RNA or double-stranded minihelix VA1 RNA. Found in a nuclear export complex with XPO5, RAN, ILF3, ZNF346 and double-stranded RNA. Interacts with XPO5 and ZNF346. Forms a complex with ILF2, YLPM1, KHDRBS1, RBMX, NCOA5 and PPP1CA. Interacts with AGO1 and AGO2. Interacts with DHX36; this interaction occurs in a RNA-dependent manner (PubMed:14731398). Interacts with ELAVL1; this interaction occurs in a RNA-dependent manner (PubMed:14731398). Interacts with HAVCR2; this interaction promotes ILF3 ubiquitination and subsequent degradation (PubMed:34110282).</text>
</comment>
<comment type="interaction">
    <interactant intactId="EBI-78756">
        <id>Q12906</id>
    </interactant>
    <interactant intactId="EBI-299649">
        <id>P22626</id>
        <label>HNRNPA2B1</label>
    </interactant>
    <organismsDiffer>false</organismsDiffer>
    <experiments>3</experiments>
</comment>
<comment type="interaction">
    <interactant intactId="EBI-78756">
        <id>Q12906</id>
    </interactant>
    <interactant intactId="EBI-16071645">
        <id>P14866-1</id>
        <label>HNRNPL</label>
    </interactant>
    <organismsDiffer>false</organismsDiffer>
    <experiments>2</experiments>
</comment>
<comment type="interaction">
    <interactant intactId="EBI-78756">
        <id>Q12906</id>
    </interactant>
    <interactant intactId="EBI-78738">
        <id>Q99873</id>
        <label>PRMT1</label>
    </interactant>
    <organismsDiffer>false</organismsDiffer>
    <experiments>4</experiments>
</comment>
<comment type="interaction">
    <interactant intactId="EBI-78756">
        <id>Q12906</id>
    </interactant>
    <interactant intactId="EBI-15693250">
        <id>P08325</id>
        <label>M</label>
    </interactant>
    <organismsDiffer>true</organismsDiffer>
    <experiments>2</experiments>
</comment>
<comment type="interaction">
    <interactant intactId="EBI-78756">
        <id>Q12906</id>
    </interactant>
    <interactant intactId="EBI-2547442">
        <id>P03496</id>
        <label>NS</label>
    </interactant>
    <organismsDiffer>true</organismsDiffer>
    <experiments>3</experiments>
</comment>
<comment type="interaction">
    <interactant intactId="EBI-78756">
        <id>Q12906</id>
    </interactant>
    <interactant intactId="EBI-6148294">
        <id>Q05127</id>
        <label>VP35</label>
    </interactant>
    <organismsDiffer>true</organismsDiffer>
    <experiments>6</experiments>
</comment>
<comment type="interaction">
    <interactant intactId="EBI-12904528">
        <id>Q12906-6</id>
    </interactant>
    <interactant intactId="EBI-372899">
        <id>Q13148</id>
        <label>TARDBP</label>
    </interactant>
    <organismsDiffer>false</organismsDiffer>
    <experiments>6</experiments>
</comment>
<comment type="interaction">
    <interactant intactId="EBI-12904528">
        <id>Q12906-6</id>
    </interactant>
    <interactant intactId="EBI-2559305">
        <id>A5D8V6</id>
        <label>VPS37C</label>
    </interactant>
    <organismsDiffer>false</organismsDiffer>
    <experiments>3</experiments>
</comment>
<comment type="subcellular location">
    <subcellularLocation>
        <location evidence="18">Nucleus</location>
        <location evidence="18">Nucleolus</location>
    </subcellularLocation>
    <subcellularLocation>
        <location evidence="20">Cytoplasm</location>
    </subcellularLocation>
    <subcellularLocation>
        <location evidence="6 18 20">Nucleus</location>
    </subcellularLocation>
    <text evidence="17">Localizes in the cytoplasm in response to viral infection. The unphosphorylated form is retained in the nucleus by ILF2. Phosphorylation at Thr-188 and Thr-315 causes the dissociation of ILF2 from the ILF2-ILF3 complex resulting in a cytoplasmic sequestration of ILF3. Localized in cytoplasmic mRNP granules containing untranslated mRNAs.</text>
</comment>
<comment type="alternative products">
    <event type="alternative splicing"/>
    <isoform>
        <id>Q12906-1</id>
        <name>1</name>
        <name>NFAR-2</name>
        <name>ILF3-E</name>
        <sequence type="displayed"/>
    </isoform>
    <isoform>
        <id>Q12906-2</id>
        <name>2</name>
        <name>NFAR-1</name>
        <name>DRBP76</name>
        <sequence type="described" ref="VSP_003888 VSP_003889"/>
    </isoform>
    <isoform>
        <id>Q12906-3</id>
        <name>3</name>
        <sequence type="described" ref="VSP_003890 VSP_003891"/>
    </isoform>
    <isoform>
        <id>Q12906-4</id>
        <name>4</name>
        <name>DRBP76 Alpha</name>
        <name>ILF3-A</name>
        <sequence type="described" ref="VSP_003883 VSP_003884 VSP_003885"/>
    </isoform>
    <isoform>
        <id>Q12906-5</id>
        <name>5</name>
        <name>DRBP76 Delta</name>
        <name>Gamma</name>
        <name>ILF3-C</name>
        <sequence type="described" ref="VSP_003886 VSP_003887"/>
    </isoform>
    <isoform>
        <id>Q12906-6</id>
        <name>6</name>
        <sequence type="described" ref="VSP_003883 VSP_003888 VSP_003889"/>
    </isoform>
    <isoform>
        <id>Q12906-7</id>
        <name>7</name>
        <sequence type="described" ref="VSP_003883"/>
    </isoform>
</comment>
<comment type="tissue specificity">
    <text>Ubiquitous.</text>
</comment>
<comment type="PTM">
    <text evidence="17">Phosphorylated at Thr-188 and Thr-315 by PKR in response to certain RNA viruses. This phosphorylation results in the dissociation of ILF2 from the ILF2-ILF3 complex resulting in a cytoplasmic sequestration of ILF3 where it can bind to viral RNAs and impede viral replication.</text>
</comment>
<comment type="PTM">
    <text evidence="6">Methylated by protein arginine N-methyltransferase 1.</text>
</comment>
<comment type="PTM">
    <text evidence="21">Ubiquitinated at Lys-297 in a TRIM47-dependent manner; this 'Lys-48'-linked ubiquitination promotes ILF3 degradation.</text>
</comment>
<comment type="miscellaneous">
    <molecule>Isoform 3</molecule>
    <text evidence="31">Dubious isoform produced through aberrant splice sites.</text>
</comment>
<comment type="sequence caution" evidence="31">
    <conflict type="miscellaneous discrepancy">
        <sequence resource="EMBL-CDS" id="AAA20994"/>
    </conflict>
    <text>Sequencing errors.</text>
</comment>
<comment type="sequence caution" evidence="31">
    <conflict type="miscellaneous discrepancy">
        <sequence resource="EMBL-CDS" id="AAH48314"/>
    </conflict>
    <text>Contaminating sequence. Potential poly-A sequence.</text>
</comment>
<gene>
    <name type="primary">ILF3</name>
    <name type="synonym">DRBF</name>
    <name type="synonym">MPHOSPH4</name>
    <name type="synonym">NF90</name>
</gene>
<dbReference type="EMBL" id="U10324">
    <property type="protein sequence ID" value="AAA20994.1"/>
    <property type="status" value="ALT_SEQ"/>
    <property type="molecule type" value="mRNA"/>
</dbReference>
<dbReference type="EMBL" id="AF147209">
    <property type="protein sequence ID" value="AAD33966.1"/>
    <property type="molecule type" value="mRNA"/>
</dbReference>
<dbReference type="EMBL" id="AF141870">
    <property type="protein sequence ID" value="AAD37575.1"/>
    <property type="molecule type" value="mRNA"/>
</dbReference>
<dbReference type="EMBL" id="AJ271741">
    <property type="protein sequence ID" value="CAC01121.1"/>
    <property type="molecule type" value="Genomic_DNA"/>
</dbReference>
<dbReference type="EMBL" id="AJ271741">
    <property type="protein sequence ID" value="CAC01122.1"/>
    <property type="molecule type" value="Genomic_DNA"/>
</dbReference>
<dbReference type="EMBL" id="AJ271741">
    <property type="protein sequence ID" value="CAC01123.1"/>
    <property type="molecule type" value="Genomic_DNA"/>
</dbReference>
<dbReference type="EMBL" id="AJ271741">
    <property type="protein sequence ID" value="CAC01124.1"/>
    <property type="molecule type" value="Genomic_DNA"/>
</dbReference>
<dbReference type="EMBL" id="AJ271744">
    <property type="protein sequence ID" value="CAC01404.1"/>
    <property type="molecule type" value="mRNA"/>
</dbReference>
<dbReference type="EMBL" id="AJ271745">
    <property type="protein sequence ID" value="CAC01405.1"/>
    <property type="molecule type" value="mRNA"/>
</dbReference>
<dbReference type="EMBL" id="AJ271746">
    <property type="protein sequence ID" value="CAC01406.1"/>
    <property type="molecule type" value="mRNA"/>
</dbReference>
<dbReference type="EMBL" id="AJ271747">
    <property type="protein sequence ID" value="CAC01407.1"/>
    <property type="molecule type" value="mRNA"/>
</dbReference>
<dbReference type="EMBL" id="AF167569">
    <property type="protein sequence ID" value="AAD51098.1"/>
    <property type="molecule type" value="mRNA"/>
</dbReference>
<dbReference type="EMBL" id="AF167570">
    <property type="protein sequence ID" value="AAD51099.1"/>
    <property type="molecule type" value="mRNA"/>
</dbReference>
<dbReference type="EMBL" id="AF320244">
    <property type="protein sequence ID" value="AAK07424.1"/>
    <property type="molecule type" value="Genomic_DNA"/>
</dbReference>
<dbReference type="EMBL" id="AF320228">
    <property type="protein sequence ID" value="AAK07424.1"/>
    <property type="status" value="JOINED"/>
    <property type="molecule type" value="Genomic_DNA"/>
</dbReference>
<dbReference type="EMBL" id="AF320229">
    <property type="protein sequence ID" value="AAK07424.1"/>
    <property type="status" value="JOINED"/>
    <property type="molecule type" value="Genomic_DNA"/>
</dbReference>
<dbReference type="EMBL" id="AF320230">
    <property type="protein sequence ID" value="AAK07424.1"/>
    <property type="status" value="JOINED"/>
    <property type="molecule type" value="Genomic_DNA"/>
</dbReference>
<dbReference type="EMBL" id="AF320231">
    <property type="protein sequence ID" value="AAK07424.1"/>
    <property type="status" value="JOINED"/>
    <property type="molecule type" value="Genomic_DNA"/>
</dbReference>
<dbReference type="EMBL" id="AF320232">
    <property type="protein sequence ID" value="AAK07424.1"/>
    <property type="status" value="JOINED"/>
    <property type="molecule type" value="Genomic_DNA"/>
</dbReference>
<dbReference type="EMBL" id="AF320233">
    <property type="protein sequence ID" value="AAK07424.1"/>
    <property type="status" value="JOINED"/>
    <property type="molecule type" value="Genomic_DNA"/>
</dbReference>
<dbReference type="EMBL" id="AF320234">
    <property type="protein sequence ID" value="AAK07424.1"/>
    <property type="status" value="JOINED"/>
    <property type="molecule type" value="Genomic_DNA"/>
</dbReference>
<dbReference type="EMBL" id="AF320235">
    <property type="protein sequence ID" value="AAK07424.1"/>
    <property type="status" value="JOINED"/>
    <property type="molecule type" value="Genomic_DNA"/>
</dbReference>
<dbReference type="EMBL" id="AF320236">
    <property type="protein sequence ID" value="AAK07424.1"/>
    <property type="status" value="JOINED"/>
    <property type="molecule type" value="Genomic_DNA"/>
</dbReference>
<dbReference type="EMBL" id="AF320237">
    <property type="protein sequence ID" value="AAK07424.1"/>
    <property type="status" value="JOINED"/>
    <property type="molecule type" value="Genomic_DNA"/>
</dbReference>
<dbReference type="EMBL" id="AF320238">
    <property type="protein sequence ID" value="AAK07424.1"/>
    <property type="status" value="JOINED"/>
    <property type="molecule type" value="Genomic_DNA"/>
</dbReference>
<dbReference type="EMBL" id="AF320239">
    <property type="protein sequence ID" value="AAK07424.1"/>
    <property type="status" value="JOINED"/>
    <property type="molecule type" value="Genomic_DNA"/>
</dbReference>
<dbReference type="EMBL" id="AF320240">
    <property type="protein sequence ID" value="AAK07424.1"/>
    <property type="status" value="JOINED"/>
    <property type="molecule type" value="Genomic_DNA"/>
</dbReference>
<dbReference type="EMBL" id="AF320241">
    <property type="protein sequence ID" value="AAK07424.1"/>
    <property type="status" value="JOINED"/>
    <property type="molecule type" value="Genomic_DNA"/>
</dbReference>
<dbReference type="EMBL" id="AF320242">
    <property type="protein sequence ID" value="AAK07424.1"/>
    <property type="status" value="JOINED"/>
    <property type="molecule type" value="Genomic_DNA"/>
</dbReference>
<dbReference type="EMBL" id="AF320243">
    <property type="protein sequence ID" value="AAK07424.1"/>
    <property type="status" value="JOINED"/>
    <property type="molecule type" value="Genomic_DNA"/>
</dbReference>
<dbReference type="EMBL" id="AF320247">
    <property type="protein sequence ID" value="AAK07425.1"/>
    <property type="molecule type" value="Genomic_DNA"/>
</dbReference>
<dbReference type="EMBL" id="AF320228">
    <property type="protein sequence ID" value="AAK07425.1"/>
    <property type="status" value="JOINED"/>
    <property type="molecule type" value="Genomic_DNA"/>
</dbReference>
<dbReference type="EMBL" id="AF320229">
    <property type="protein sequence ID" value="AAK07425.1"/>
    <property type="status" value="JOINED"/>
    <property type="molecule type" value="Genomic_DNA"/>
</dbReference>
<dbReference type="EMBL" id="AF320230">
    <property type="protein sequence ID" value="AAK07425.1"/>
    <property type="status" value="JOINED"/>
    <property type="molecule type" value="Genomic_DNA"/>
</dbReference>
<dbReference type="EMBL" id="AF320231">
    <property type="protein sequence ID" value="AAK07425.1"/>
    <property type="status" value="JOINED"/>
    <property type="molecule type" value="Genomic_DNA"/>
</dbReference>
<dbReference type="EMBL" id="AF320232">
    <property type="protein sequence ID" value="AAK07425.1"/>
    <property type="status" value="JOINED"/>
    <property type="molecule type" value="Genomic_DNA"/>
</dbReference>
<dbReference type="EMBL" id="AF320233">
    <property type="protein sequence ID" value="AAK07425.1"/>
    <property type="status" value="JOINED"/>
    <property type="molecule type" value="Genomic_DNA"/>
</dbReference>
<dbReference type="EMBL" id="AF320234">
    <property type="protein sequence ID" value="AAK07425.1"/>
    <property type="status" value="JOINED"/>
    <property type="molecule type" value="Genomic_DNA"/>
</dbReference>
<dbReference type="EMBL" id="AF320235">
    <property type="protein sequence ID" value="AAK07425.1"/>
    <property type="status" value="JOINED"/>
    <property type="molecule type" value="Genomic_DNA"/>
</dbReference>
<dbReference type="EMBL" id="AF320236">
    <property type="protein sequence ID" value="AAK07425.1"/>
    <property type="status" value="JOINED"/>
    <property type="molecule type" value="Genomic_DNA"/>
</dbReference>
<dbReference type="EMBL" id="AF320237">
    <property type="protein sequence ID" value="AAK07425.1"/>
    <property type="status" value="JOINED"/>
    <property type="molecule type" value="Genomic_DNA"/>
</dbReference>
<dbReference type="EMBL" id="AF320238">
    <property type="protein sequence ID" value="AAK07425.1"/>
    <property type="status" value="JOINED"/>
    <property type="molecule type" value="Genomic_DNA"/>
</dbReference>
<dbReference type="EMBL" id="AF320239">
    <property type="protein sequence ID" value="AAK07425.1"/>
    <property type="status" value="JOINED"/>
    <property type="molecule type" value="Genomic_DNA"/>
</dbReference>
<dbReference type="EMBL" id="AF320240">
    <property type="protein sequence ID" value="AAK07425.1"/>
    <property type="status" value="JOINED"/>
    <property type="molecule type" value="Genomic_DNA"/>
</dbReference>
<dbReference type="EMBL" id="AF320241">
    <property type="protein sequence ID" value="AAK07425.1"/>
    <property type="status" value="JOINED"/>
    <property type="molecule type" value="Genomic_DNA"/>
</dbReference>
<dbReference type="EMBL" id="AF320242">
    <property type="protein sequence ID" value="AAK07425.1"/>
    <property type="status" value="JOINED"/>
    <property type="molecule type" value="Genomic_DNA"/>
</dbReference>
<dbReference type="EMBL" id="AF320243">
    <property type="protein sequence ID" value="AAK07425.1"/>
    <property type="status" value="JOINED"/>
    <property type="molecule type" value="Genomic_DNA"/>
</dbReference>
<dbReference type="EMBL" id="AF320245">
    <property type="protein sequence ID" value="AAK07425.1"/>
    <property type="status" value="JOINED"/>
    <property type="molecule type" value="Genomic_DNA"/>
</dbReference>
<dbReference type="EMBL" id="AF320246">
    <property type="protein sequence ID" value="AAK07425.1"/>
    <property type="status" value="JOINED"/>
    <property type="molecule type" value="Genomic_DNA"/>
</dbReference>
<dbReference type="EMBL" id="AK291617">
    <property type="protein sequence ID" value="BAF84306.1"/>
    <property type="molecule type" value="mRNA"/>
</dbReference>
<dbReference type="EMBL" id="AC011475">
    <property type="status" value="NOT_ANNOTATED_CDS"/>
    <property type="molecule type" value="Genomic_DNA"/>
</dbReference>
<dbReference type="EMBL" id="CH471106">
    <property type="protein sequence ID" value="EAW84132.1"/>
    <property type="molecule type" value="Genomic_DNA"/>
</dbReference>
<dbReference type="EMBL" id="BC048314">
    <property type="protein sequence ID" value="AAH48314.1"/>
    <property type="status" value="ALT_SEQ"/>
    <property type="molecule type" value="mRNA"/>
</dbReference>
<dbReference type="EMBL" id="BC064836">
    <property type="protein sequence ID" value="AAH64836.1"/>
    <property type="molecule type" value="mRNA"/>
</dbReference>
<dbReference type="EMBL" id="X98264">
    <property type="protein sequence ID" value="CAA66917.1"/>
    <property type="molecule type" value="mRNA"/>
</dbReference>
<dbReference type="EMBL" id="X98265">
    <property type="protein sequence ID" value="CAA66918.1"/>
    <property type="molecule type" value="mRNA"/>
</dbReference>
<dbReference type="EMBL" id="AF202445">
    <property type="protein sequence ID" value="AAF82685.1"/>
    <property type="molecule type" value="Genomic_DNA"/>
</dbReference>
<dbReference type="EMBL" id="AF202445">
    <property type="protein sequence ID" value="AAF82686.1"/>
    <property type="molecule type" value="Genomic_DNA"/>
</dbReference>
<dbReference type="EMBL" id="AF202445">
    <property type="protein sequence ID" value="AAF82687.1"/>
    <property type="molecule type" value="Genomic_DNA"/>
</dbReference>
<dbReference type="EMBL" id="AF007140">
    <property type="protein sequence ID" value="AAC19152.1"/>
    <property type="molecule type" value="mRNA"/>
</dbReference>
<dbReference type="CCDS" id="CCDS12246.1">
    <molecule id="Q12906-1"/>
</dbReference>
<dbReference type="CCDS" id="CCDS12247.1">
    <molecule id="Q12906-2"/>
</dbReference>
<dbReference type="CCDS" id="CCDS45965.1">
    <molecule id="Q12906-7"/>
</dbReference>
<dbReference type="CCDS" id="CCDS45966.1">
    <molecule id="Q12906-5"/>
</dbReference>
<dbReference type="CCDS" id="CCDS45967.1">
    <molecule id="Q12906-6"/>
</dbReference>
<dbReference type="PIR" id="B54857">
    <property type="entry name" value="B54857"/>
</dbReference>
<dbReference type="RefSeq" id="NP_001131145.1">
    <molecule id="Q12906-6"/>
    <property type="nucleotide sequence ID" value="NM_001137673.2"/>
</dbReference>
<dbReference type="RefSeq" id="NP_001381737.1">
    <molecule id="Q12906-7"/>
    <property type="nucleotide sequence ID" value="NM_001394808.1"/>
</dbReference>
<dbReference type="RefSeq" id="NP_001381738.1">
    <molecule id="Q12906-7"/>
    <property type="nucleotide sequence ID" value="NM_001394809.1"/>
</dbReference>
<dbReference type="RefSeq" id="NP_001381739.1">
    <molecule id="Q12906-7"/>
    <property type="nucleotide sequence ID" value="NM_001394810.1"/>
</dbReference>
<dbReference type="RefSeq" id="NP_001381740.1">
    <molecule id="Q12906-1"/>
    <property type="nucleotide sequence ID" value="NM_001394811.1"/>
</dbReference>
<dbReference type="RefSeq" id="NP_001381741.1">
    <molecule id="Q12906-1"/>
    <property type="nucleotide sequence ID" value="NM_001394812.1"/>
</dbReference>
<dbReference type="RefSeq" id="NP_001381750.1">
    <molecule id="Q12906-6"/>
    <property type="nucleotide sequence ID" value="NM_001394821.1"/>
</dbReference>
<dbReference type="RefSeq" id="NP_001381751.1">
    <molecule id="Q12906-6"/>
    <property type="nucleotide sequence ID" value="NM_001394822.1"/>
</dbReference>
<dbReference type="RefSeq" id="NP_001381752.1">
    <molecule id="Q12906-6"/>
    <property type="nucleotide sequence ID" value="NM_001394823.1"/>
</dbReference>
<dbReference type="RefSeq" id="NP_001381753.1">
    <molecule id="Q12906-2"/>
    <property type="nucleotide sequence ID" value="NM_001394824.1"/>
</dbReference>
<dbReference type="RefSeq" id="NP_001381755.1">
    <molecule id="Q12906-2"/>
    <property type="nucleotide sequence ID" value="NM_001394826.1"/>
</dbReference>
<dbReference type="RefSeq" id="NP_004507.2">
    <molecule id="Q12906-2"/>
    <property type="nucleotide sequence ID" value="NM_004516.3"/>
</dbReference>
<dbReference type="RefSeq" id="NP_036350.2">
    <molecule id="Q12906-1"/>
    <property type="nucleotide sequence ID" value="NM_012218.3"/>
</dbReference>
<dbReference type="RefSeq" id="NP_060090.2">
    <molecule id="Q12906-7"/>
    <property type="nucleotide sequence ID" value="NM_017620.2"/>
</dbReference>
<dbReference type="RefSeq" id="NP_703194.1">
    <molecule id="Q12906-5"/>
    <property type="nucleotide sequence ID" value="NM_153464.3"/>
</dbReference>
<dbReference type="RefSeq" id="XP_011526286.2">
    <property type="nucleotide sequence ID" value="XM_011527984.2"/>
</dbReference>
<dbReference type="RefSeq" id="XP_016882252.1">
    <property type="nucleotide sequence ID" value="XM_017026763.1"/>
</dbReference>
<dbReference type="RefSeq" id="XP_047294734.1">
    <molecule id="Q12906-7"/>
    <property type="nucleotide sequence ID" value="XM_047438778.1"/>
</dbReference>
<dbReference type="RefSeq" id="XP_047294735.1">
    <molecule id="Q12906-7"/>
    <property type="nucleotide sequence ID" value="XM_047438779.1"/>
</dbReference>
<dbReference type="RefSeq" id="XP_054176869.1">
    <molecule id="Q12906-7"/>
    <property type="nucleotide sequence ID" value="XM_054320894.1"/>
</dbReference>
<dbReference type="RefSeq" id="XP_054176870.1">
    <molecule id="Q12906-7"/>
    <property type="nucleotide sequence ID" value="XM_054320895.1"/>
</dbReference>
<dbReference type="PDB" id="2L33">
    <property type="method" value="NMR"/>
    <property type="chains" value="A=521-600"/>
</dbReference>
<dbReference type="PDB" id="3P1X">
    <property type="method" value="X-ray"/>
    <property type="resolution" value="1.90 A"/>
    <property type="chains" value="A/B=520-594"/>
</dbReference>
<dbReference type="PDB" id="7RJM">
    <property type="method" value="X-ray"/>
    <property type="resolution" value="2.10 A"/>
    <property type="chains" value="C=99-106"/>
</dbReference>
<dbReference type="PDB" id="7RJQ">
    <property type="method" value="X-ray"/>
    <property type="resolution" value="1.72 A"/>
    <property type="chains" value="B=99-106"/>
</dbReference>
<dbReference type="PDBsum" id="2L33"/>
<dbReference type="PDBsum" id="3P1X"/>
<dbReference type="PDBsum" id="7RJM"/>
<dbReference type="PDBsum" id="7RJQ"/>
<dbReference type="SMR" id="Q12906"/>
<dbReference type="BioGRID" id="109822">
    <property type="interactions" value="923"/>
</dbReference>
<dbReference type="CORUM" id="Q12906"/>
<dbReference type="DIP" id="DIP-29853N"/>
<dbReference type="FunCoup" id="Q12906">
    <property type="interactions" value="3460"/>
</dbReference>
<dbReference type="IntAct" id="Q12906">
    <property type="interactions" value="734"/>
</dbReference>
<dbReference type="MINT" id="Q12906"/>
<dbReference type="STRING" id="9606.ENSP00000404121"/>
<dbReference type="BindingDB" id="Q12906"/>
<dbReference type="ChEMBL" id="CHEMBL5465305"/>
<dbReference type="GlyGen" id="Q12906">
    <property type="glycosylation" value="3 sites, 1 O-linked glycan (3 sites)"/>
</dbReference>
<dbReference type="iPTMnet" id="Q12906"/>
<dbReference type="MetOSite" id="Q12906"/>
<dbReference type="PhosphoSitePlus" id="Q12906"/>
<dbReference type="SwissPalm" id="Q12906"/>
<dbReference type="BioMuta" id="ILF3"/>
<dbReference type="DMDM" id="62512150"/>
<dbReference type="CPTAC" id="CPTAC-395"/>
<dbReference type="CPTAC" id="CPTAC-396"/>
<dbReference type="jPOST" id="Q12906"/>
<dbReference type="MassIVE" id="Q12906"/>
<dbReference type="PaxDb" id="9606-ENSP00000404121"/>
<dbReference type="PeptideAtlas" id="Q12906"/>
<dbReference type="ProteomicsDB" id="33984"/>
<dbReference type="ProteomicsDB" id="59014">
    <molecule id="Q12906-1"/>
</dbReference>
<dbReference type="ProteomicsDB" id="59015">
    <molecule id="Q12906-2"/>
</dbReference>
<dbReference type="ProteomicsDB" id="59016">
    <molecule id="Q12906-3"/>
</dbReference>
<dbReference type="ProteomicsDB" id="59017">
    <molecule id="Q12906-4"/>
</dbReference>
<dbReference type="ProteomicsDB" id="59018">
    <molecule id="Q12906-5"/>
</dbReference>
<dbReference type="ProteomicsDB" id="59019">
    <molecule id="Q12906-6"/>
</dbReference>
<dbReference type="Pumba" id="Q12906"/>
<dbReference type="TopDownProteomics" id="Q12906-1">
    <molecule id="Q12906-1"/>
</dbReference>
<dbReference type="Antibodypedia" id="1051">
    <property type="antibodies" value="363 antibodies from 36 providers"/>
</dbReference>
<dbReference type="DNASU" id="3609"/>
<dbReference type="Ensembl" id="ENST00000250241.12">
    <molecule id="Q12906-5"/>
    <property type="protein sequence ID" value="ENSP00000250241.8"/>
    <property type="gene ID" value="ENSG00000129351.18"/>
</dbReference>
<dbReference type="Ensembl" id="ENST00000407004.8">
    <molecule id="Q12906-6"/>
    <property type="protein sequence ID" value="ENSP00000384660.2"/>
    <property type="gene ID" value="ENSG00000129351.18"/>
</dbReference>
<dbReference type="Ensembl" id="ENST00000588657.6">
    <molecule id="Q12906-7"/>
    <property type="protein sequence ID" value="ENSP00000468181.1"/>
    <property type="gene ID" value="ENSG00000129351.18"/>
</dbReference>
<dbReference type="Ensembl" id="ENST00000589998.6">
    <molecule id="Q12906-2"/>
    <property type="protein sequence ID" value="ENSP00000465219.1"/>
    <property type="gene ID" value="ENSG00000129351.18"/>
</dbReference>
<dbReference type="Ensembl" id="ENST00000590261.5">
    <molecule id="Q12906-1"/>
    <property type="protein sequence ID" value="ENSP00000468156.1"/>
    <property type="gene ID" value="ENSG00000129351.18"/>
</dbReference>
<dbReference type="Ensembl" id="ENST00000592763.5">
    <molecule id="Q12906-4"/>
    <property type="protein sequence ID" value="ENSP00000465515.1"/>
    <property type="gene ID" value="ENSG00000129351.18"/>
</dbReference>
<dbReference type="GeneID" id="3609"/>
<dbReference type="KEGG" id="hsa:3609"/>
<dbReference type="MANE-Select" id="ENST00000588657.6">
    <molecule id="Q12906-7"/>
    <property type="protein sequence ID" value="ENSP00000468181.1"/>
    <property type="RefSeq nucleotide sequence ID" value="NM_017620.3"/>
    <property type="RefSeq protein sequence ID" value="NP_060090.2"/>
</dbReference>
<dbReference type="UCSC" id="uc002mpl.3">
    <molecule id="Q12906-1"/>
    <property type="organism name" value="human"/>
</dbReference>
<dbReference type="AGR" id="HGNC:6038"/>
<dbReference type="CTD" id="3609"/>
<dbReference type="DisGeNET" id="3609"/>
<dbReference type="GeneCards" id="ILF3"/>
<dbReference type="HGNC" id="HGNC:6038">
    <property type="gene designation" value="ILF3"/>
</dbReference>
<dbReference type="HPA" id="ENSG00000129351">
    <property type="expression patterns" value="Low tissue specificity"/>
</dbReference>
<dbReference type="MIM" id="603182">
    <property type="type" value="gene"/>
</dbReference>
<dbReference type="neXtProt" id="NX_Q12906"/>
<dbReference type="OpenTargets" id="ENSG00000129351"/>
<dbReference type="PharmGKB" id="PA29853"/>
<dbReference type="VEuPathDB" id="HostDB:ENSG00000129351"/>
<dbReference type="eggNOG" id="KOG3792">
    <property type="taxonomic scope" value="Eukaryota"/>
</dbReference>
<dbReference type="GeneTree" id="ENSGT00940000156719"/>
<dbReference type="HOGENOM" id="CLU_015490_0_0_1"/>
<dbReference type="InParanoid" id="Q12906"/>
<dbReference type="OMA" id="PANHTQY"/>
<dbReference type="OrthoDB" id="8898434at2759"/>
<dbReference type="PAN-GO" id="Q12906">
    <property type="GO annotations" value="2 GO annotations based on evolutionary models"/>
</dbReference>
<dbReference type="PhylomeDB" id="Q12906"/>
<dbReference type="TreeFam" id="TF320194"/>
<dbReference type="PathwayCommons" id="Q12906"/>
<dbReference type="Reactome" id="R-HSA-9762293">
    <property type="pathway name" value="Regulation of CDH11 gene transcription"/>
</dbReference>
<dbReference type="Reactome" id="R-HSA-9833482">
    <property type="pathway name" value="PKR-mediated signaling"/>
</dbReference>
<dbReference type="SignaLink" id="Q12906"/>
<dbReference type="SIGNOR" id="Q12906"/>
<dbReference type="BioGRID-ORCS" id="3609">
    <property type="hits" value="672 hits in 1165 CRISPR screens"/>
</dbReference>
<dbReference type="CD-CODE" id="232F8A39">
    <property type="entry name" value="P-body"/>
</dbReference>
<dbReference type="CD-CODE" id="804901D1">
    <property type="entry name" value="Nuclear speckle"/>
</dbReference>
<dbReference type="CD-CODE" id="91857CE7">
    <property type="entry name" value="Nucleolus"/>
</dbReference>
<dbReference type="CD-CODE" id="DEE660B4">
    <property type="entry name" value="Stress granule"/>
</dbReference>
<dbReference type="CD-CODE" id="F85A2E29">
    <property type="entry name" value="IMP1 RNP granule"/>
</dbReference>
<dbReference type="ChiTaRS" id="ILF3">
    <property type="organism name" value="human"/>
</dbReference>
<dbReference type="EvolutionaryTrace" id="Q12906"/>
<dbReference type="GeneWiki" id="ILF3"/>
<dbReference type="GenomeRNAi" id="3609"/>
<dbReference type="Pharos" id="Q12906">
    <property type="development level" value="Tbio"/>
</dbReference>
<dbReference type="PRO" id="PR:Q12906"/>
<dbReference type="Proteomes" id="UP000005640">
    <property type="component" value="Chromosome 19"/>
</dbReference>
<dbReference type="RNAct" id="Q12906">
    <property type="molecule type" value="protein"/>
</dbReference>
<dbReference type="Bgee" id="ENSG00000129351">
    <property type="expression patterns" value="Expressed in ganglionic eminence and 207 other cell types or tissues"/>
</dbReference>
<dbReference type="ExpressionAtlas" id="Q12906">
    <property type="expression patterns" value="baseline and differential"/>
</dbReference>
<dbReference type="GO" id="GO:0005737">
    <property type="term" value="C:cytoplasm"/>
    <property type="evidence" value="ECO:0000314"/>
    <property type="project" value="UniProtKB"/>
</dbReference>
<dbReference type="GO" id="GO:0005829">
    <property type="term" value="C:cytosol"/>
    <property type="evidence" value="ECO:0000304"/>
    <property type="project" value="Reactome"/>
</dbReference>
<dbReference type="GO" id="GO:0005576">
    <property type="term" value="C:extracellular region"/>
    <property type="evidence" value="ECO:0007005"/>
    <property type="project" value="BHF-UCL"/>
</dbReference>
<dbReference type="GO" id="GO:0016020">
    <property type="term" value="C:membrane"/>
    <property type="evidence" value="ECO:0007005"/>
    <property type="project" value="UniProtKB"/>
</dbReference>
<dbReference type="GO" id="GO:0005739">
    <property type="term" value="C:mitochondrion"/>
    <property type="evidence" value="ECO:0000314"/>
    <property type="project" value="HPA"/>
</dbReference>
<dbReference type="GO" id="GO:0005730">
    <property type="term" value="C:nucleolus"/>
    <property type="evidence" value="ECO:0000314"/>
    <property type="project" value="HPA"/>
</dbReference>
<dbReference type="GO" id="GO:0005654">
    <property type="term" value="C:nucleoplasm"/>
    <property type="evidence" value="ECO:0000314"/>
    <property type="project" value="HPA"/>
</dbReference>
<dbReference type="GO" id="GO:0005634">
    <property type="term" value="C:nucleus"/>
    <property type="evidence" value="ECO:0000314"/>
    <property type="project" value="UniProtKB"/>
</dbReference>
<dbReference type="GO" id="GO:1990904">
    <property type="term" value="C:ribonucleoprotein complex"/>
    <property type="evidence" value="ECO:0000314"/>
    <property type="project" value="UniProtKB"/>
</dbReference>
<dbReference type="GO" id="GO:0003677">
    <property type="term" value="F:DNA binding"/>
    <property type="evidence" value="ECO:0000314"/>
    <property type="project" value="UniProtKB"/>
</dbReference>
<dbReference type="GO" id="GO:0003725">
    <property type="term" value="F:double-stranded RNA binding"/>
    <property type="evidence" value="ECO:0000314"/>
    <property type="project" value="UniProtKB"/>
</dbReference>
<dbReference type="GO" id="GO:0035925">
    <property type="term" value="F:mRNA 3'-UTR AU-rich region binding"/>
    <property type="evidence" value="ECO:0000314"/>
    <property type="project" value="GO_Central"/>
</dbReference>
<dbReference type="GO" id="GO:0003723">
    <property type="term" value="F:RNA binding"/>
    <property type="evidence" value="ECO:0007005"/>
    <property type="project" value="UniProtKB"/>
</dbReference>
<dbReference type="GO" id="GO:0003727">
    <property type="term" value="F:single-stranded RNA binding"/>
    <property type="evidence" value="ECO:0000318"/>
    <property type="project" value="GO_Central"/>
</dbReference>
<dbReference type="GO" id="GO:0001618">
    <property type="term" value="F:virus receptor activity"/>
    <property type="evidence" value="ECO:0000314"/>
    <property type="project" value="UniProt"/>
</dbReference>
<dbReference type="GO" id="GO:0051607">
    <property type="term" value="P:defense response to virus"/>
    <property type="evidence" value="ECO:0007669"/>
    <property type="project" value="UniProtKB-KW"/>
</dbReference>
<dbReference type="GO" id="GO:0045892">
    <property type="term" value="P:negative regulation of DNA-templated transcription"/>
    <property type="evidence" value="ECO:0000314"/>
    <property type="project" value="UniProtKB"/>
</dbReference>
<dbReference type="GO" id="GO:0017148">
    <property type="term" value="P:negative regulation of translation"/>
    <property type="evidence" value="ECO:0000250"/>
    <property type="project" value="UniProtKB"/>
</dbReference>
<dbReference type="GO" id="GO:0045071">
    <property type="term" value="P:negative regulation of viral genome replication"/>
    <property type="evidence" value="ECO:0000250"/>
    <property type="project" value="UniProtKB"/>
</dbReference>
<dbReference type="GO" id="GO:0045893">
    <property type="term" value="P:positive regulation of DNA-templated transcription"/>
    <property type="evidence" value="ECO:0000314"/>
    <property type="project" value="UniProtKB"/>
</dbReference>
<dbReference type="GO" id="GO:0006468">
    <property type="term" value="P:protein phosphorylation"/>
    <property type="evidence" value="ECO:0000314"/>
    <property type="project" value="UniProtKB"/>
</dbReference>
<dbReference type="GO" id="GO:0160091">
    <property type="term" value="P:spliceosome-depend formation of circular RNA"/>
    <property type="evidence" value="ECO:0000314"/>
    <property type="project" value="UniProtKB"/>
</dbReference>
<dbReference type="CDD" id="cd19910">
    <property type="entry name" value="DSRM_ILF3_rpt1"/>
    <property type="match status" value="1"/>
</dbReference>
<dbReference type="CDD" id="cd19912">
    <property type="entry name" value="DSRM_ILF3_rpt2"/>
    <property type="match status" value="1"/>
</dbReference>
<dbReference type="FunFam" id="1.10.1410.40:FF:000001">
    <property type="entry name" value="interleukin enhancer-binding factor 3 isoform X1"/>
    <property type="match status" value="1"/>
</dbReference>
<dbReference type="FunFam" id="3.30.160.20:FF:000006">
    <property type="entry name" value="interleukin enhancer-binding factor 3 isoform X2"/>
    <property type="match status" value="1"/>
</dbReference>
<dbReference type="FunFam" id="3.30.160.20:FF:000008">
    <property type="entry name" value="interleukin enhancer-binding factor 3 isoform X2"/>
    <property type="match status" value="1"/>
</dbReference>
<dbReference type="Gene3D" id="1.10.1410.40">
    <property type="match status" value="1"/>
</dbReference>
<dbReference type="Gene3D" id="3.30.160.20">
    <property type="match status" value="2"/>
</dbReference>
<dbReference type="Gene3D" id="3.30.460.10">
    <property type="entry name" value="Beta Polymerase, domain 2"/>
    <property type="match status" value="2"/>
</dbReference>
<dbReference type="InterPro" id="IPR014720">
    <property type="entry name" value="dsRBD_dom"/>
</dbReference>
<dbReference type="InterPro" id="IPR033099">
    <property type="entry name" value="DSRM1_ILF3"/>
</dbReference>
<dbReference type="InterPro" id="IPR006561">
    <property type="entry name" value="DZF_dom"/>
</dbReference>
<dbReference type="InterPro" id="IPR049402">
    <property type="entry name" value="DZF_dom_C"/>
</dbReference>
<dbReference type="InterPro" id="IPR049401">
    <property type="entry name" value="DZF_dom_N"/>
</dbReference>
<dbReference type="InterPro" id="IPR043519">
    <property type="entry name" value="NT_sf"/>
</dbReference>
<dbReference type="PANTHER" id="PTHR45762:SF4">
    <property type="entry name" value="INTERLEUKIN ENHANCER-BINDING FACTOR 3"/>
    <property type="match status" value="1"/>
</dbReference>
<dbReference type="PANTHER" id="PTHR45762">
    <property type="entry name" value="ZINC FINGER RNA-BINDING PROTEIN"/>
    <property type="match status" value="1"/>
</dbReference>
<dbReference type="Pfam" id="PF00035">
    <property type="entry name" value="dsrm"/>
    <property type="match status" value="2"/>
</dbReference>
<dbReference type="Pfam" id="PF20965">
    <property type="entry name" value="DZF_C"/>
    <property type="match status" value="1"/>
</dbReference>
<dbReference type="Pfam" id="PF07528">
    <property type="entry name" value="DZF_N"/>
    <property type="match status" value="1"/>
</dbReference>
<dbReference type="SMART" id="SM00358">
    <property type="entry name" value="DSRM"/>
    <property type="match status" value="2"/>
</dbReference>
<dbReference type="SMART" id="SM00572">
    <property type="entry name" value="DZF"/>
    <property type="match status" value="1"/>
</dbReference>
<dbReference type="SUPFAM" id="SSF54768">
    <property type="entry name" value="dsRNA-binding domain-like"/>
    <property type="match status" value="2"/>
</dbReference>
<dbReference type="PROSITE" id="PS50137">
    <property type="entry name" value="DS_RBD"/>
    <property type="match status" value="2"/>
</dbReference>
<dbReference type="PROSITE" id="PS51703">
    <property type="entry name" value="DZF"/>
    <property type="match status" value="1"/>
</dbReference>
<organism>
    <name type="scientific">Homo sapiens</name>
    <name type="common">Human</name>
    <dbReference type="NCBI Taxonomy" id="9606"/>
    <lineage>
        <taxon>Eukaryota</taxon>
        <taxon>Metazoa</taxon>
        <taxon>Chordata</taxon>
        <taxon>Craniata</taxon>
        <taxon>Vertebrata</taxon>
        <taxon>Euteleostomi</taxon>
        <taxon>Mammalia</taxon>
        <taxon>Eutheria</taxon>
        <taxon>Euarchontoglires</taxon>
        <taxon>Primates</taxon>
        <taxon>Haplorrhini</taxon>
        <taxon>Catarrhini</taxon>
        <taxon>Hominidae</taxon>
        <taxon>Homo</taxon>
    </lineage>
</organism>
<accession>Q12906</accession>
<accession>A8K6F2</accession>
<accession>G5E9M5</accession>
<accession>O43409</accession>
<accession>Q6P1X1</accession>
<accession>Q86XY7</accession>
<accession>Q99544</accession>
<accession>Q99545</accession>
<accession>Q9BZH4</accession>
<accession>Q9BZH5</accession>
<accession>Q9NQ95</accession>
<accession>Q9NQ96</accession>
<accession>Q9NQ97</accession>
<accession>Q9NQ98</accession>
<accession>Q9NQ99</accession>
<accession>Q9NQA0</accession>
<accession>Q9NQA1</accession>
<accession>Q9NQA2</accession>
<accession>Q9NRN2</accession>
<accession>Q9NRN3</accession>
<accession>Q9NRN4</accession>
<accession>Q9UMZ9</accession>
<accession>Q9UN00</accession>
<accession>Q9UN84</accession>
<accession>Q9UNA2</accession>
<protein>
    <recommendedName>
        <fullName>Interleukin enhancer-binding factor 3</fullName>
    </recommendedName>
    <alternativeName>
        <fullName>Double-stranded RNA-binding protein 76</fullName>
        <shortName>DRBP76</shortName>
    </alternativeName>
    <alternativeName>
        <fullName>M-phase phosphoprotein 4</fullName>
        <shortName>MPP4</shortName>
    </alternativeName>
    <alternativeName>
        <fullName>Nuclear factor associated with dsRNA</fullName>
        <shortName>NFAR</shortName>
    </alternativeName>
    <alternativeName>
        <fullName>Nuclear factor of activated T-cells 90 kDa</fullName>
        <shortName>NF-AT-90</shortName>
    </alternativeName>
    <alternativeName>
        <fullName>Translational control protein 80</fullName>
        <shortName>TCP80</shortName>
    </alternativeName>
</protein>
<sequence length="894" mass="95338">MRPMRIFVNDDRHVMAKHSSVYPTQEELEAVQNMVSHTERALKAVSDWIDEQEKGSSEQAESDNMDVPPEDDSKEGAGEQKTEHMTRTLRGVMRVGLVAKGLLLKGDLDLELVLLCKEKPTTALLDKVADNLAIQLAAVTEDKYEILQSVDDAAIVIKNTKEPPLSLTIHLTSPVVREEMEKVLAGETLSVNDPPDVLDRQKCLAALASLRHAKWFQARANGLKSCVIVIRVLRDLCTRVPTWGPLRGWPLELLCEKSIGTANRPMGAGEALRRVLECLASGIVMPDGSGIYDPCEKEATDAIGHLDRQQREDITQSAQHALRLAAFGQLHKVLGMDPLPSKMPKKPKNENPVDYTVQIPPSTTYAITPMKRPMEEDGEEKSPSKKKKKIQKKEEKAEPPQAMNALMRLNQLKPGLQYKLVSQTGPVHAPIFTMSVEVDGNSFEASGPSKKTAKLHVAVKVLQDMGLPTGAEGRDSSKGEDSAEETEAKPAVVAPAPVVEAVSTPSAAFPSDATAEQGPILTKHGKNPVMELNEKRRGLKYELISETGGSHDKRFVMEVEVDGQKFQGAGSNKKVAKAYAALAALEKLFPDTPLALDANKKKRAPVPVRGGPKFAAKPHNPGFGMGGPMHNEVPPPPNLRGRGRGGSIRGRGRGRGFGGANHGGYMNAGAGYGSYGYGGNSATAGYSQFYSNGGHSGNASGGGGGGGGGSSGYGSYYQGDNYNSPVPPKHAGKKQPHGGQQKPSYGSGYQSHQGQQQSYNQSPYSNYGPPQGKQKGYNHGQGSYSYSNSYNSPGGGGGSDYNYESKFNYSGSGGRSGGNSYGSGGASYNPGSHGGYGGGSGGGSSYQGKQGGYSQSNYNSPGSGQNYSGPPSSYQSSQGGYGRNADHSMNYQYR</sequence>
<feature type="chain" id="PRO_0000126070" description="Interleukin enhancer-binding factor 3">
    <location>
        <begin position="1"/>
        <end position="894"/>
    </location>
</feature>
<feature type="domain" description="DZF" evidence="3">
    <location>
        <begin position="5"/>
        <end position="378"/>
    </location>
</feature>
<feature type="domain" description="DRBM 1" evidence="2">
    <location>
        <begin position="398"/>
        <end position="467"/>
    </location>
</feature>
<feature type="domain" description="DRBM 2" evidence="2">
    <location>
        <begin position="524"/>
        <end position="590"/>
    </location>
</feature>
<feature type="region of interest" description="Disordered" evidence="4">
    <location>
        <begin position="50"/>
        <end position="86"/>
    </location>
</feature>
<feature type="region of interest" description="Disordered" evidence="4">
    <location>
        <begin position="363"/>
        <end position="401"/>
    </location>
</feature>
<feature type="region of interest" description="Disordered" evidence="4">
    <location>
        <begin position="466"/>
        <end position="524"/>
    </location>
</feature>
<feature type="region of interest" description="Interaction with PRMT1" evidence="6">
    <location>
        <begin position="609"/>
        <end position="894"/>
    </location>
</feature>
<feature type="region of interest" description="Disordered" evidence="4">
    <location>
        <begin position="625"/>
        <end position="660"/>
    </location>
</feature>
<feature type="region of interest" description="Disordered" evidence="4">
    <location>
        <begin position="718"/>
        <end position="894"/>
    </location>
</feature>
<feature type="short sequence motif" description="Bipartite nuclear localization signal" evidence="1">
    <location>
        <begin position="371"/>
        <end position="389"/>
    </location>
</feature>
<feature type="compositionally biased region" description="Acidic residues" evidence="4">
    <location>
        <begin position="60"/>
        <end position="73"/>
    </location>
</feature>
<feature type="compositionally biased region" description="Basic and acidic residues" evidence="4">
    <location>
        <begin position="74"/>
        <end position="86"/>
    </location>
</feature>
<feature type="compositionally biased region" description="Basic and acidic residues" evidence="4">
    <location>
        <begin position="372"/>
        <end position="383"/>
    </location>
</feature>
<feature type="compositionally biased region" description="Basic and acidic residues" evidence="4">
    <location>
        <begin position="472"/>
        <end position="481"/>
    </location>
</feature>
<feature type="compositionally biased region" description="Low complexity" evidence="4">
    <location>
        <begin position="489"/>
        <end position="508"/>
    </location>
</feature>
<feature type="compositionally biased region" description="Gly residues" evidence="4">
    <location>
        <begin position="644"/>
        <end position="660"/>
    </location>
</feature>
<feature type="compositionally biased region" description="Low complexity" evidence="4">
    <location>
        <begin position="743"/>
        <end position="770"/>
    </location>
</feature>
<feature type="compositionally biased region" description="Low complexity" evidence="4">
    <location>
        <begin position="777"/>
        <end position="792"/>
    </location>
</feature>
<feature type="compositionally biased region" description="Gly residues" evidence="4">
    <location>
        <begin position="811"/>
        <end position="825"/>
    </location>
</feature>
<feature type="compositionally biased region" description="Gly residues" evidence="4">
    <location>
        <begin position="832"/>
        <end position="851"/>
    </location>
</feature>
<feature type="compositionally biased region" description="Polar residues" evidence="4">
    <location>
        <begin position="857"/>
        <end position="866"/>
    </location>
</feature>
<feature type="compositionally biased region" description="Low complexity" evidence="4">
    <location>
        <begin position="867"/>
        <end position="878"/>
    </location>
</feature>
<feature type="modified residue" description="Phosphoserine" evidence="37 38 39 40">
    <location>
        <position position="62"/>
    </location>
</feature>
<feature type="modified residue" description="N6-acetyllysine" evidence="35">
    <location>
        <position position="100"/>
    </location>
</feature>
<feature type="modified residue" description="Phosphothreonine; by PKR" evidence="17">
    <location>
        <position position="188"/>
    </location>
</feature>
<feature type="modified residue" description="Phosphoserine" evidence="34 37 38">
    <location>
        <position position="190"/>
    </location>
</feature>
<feature type="modified residue" description="Phosphothreonine; by PKR" evidence="17">
    <location>
        <position position="315"/>
    </location>
</feature>
<feature type="modified residue" description="Phosphoserine" evidence="37 38 39">
    <location>
        <position position="382"/>
    </location>
</feature>
<feature type="modified residue" description="Phosphoserine" evidence="37">
    <location>
        <position position="384"/>
    </location>
</feature>
<feature type="modified residue" description="N6-acetyllysine" evidence="35">
    <location>
        <position position="460"/>
    </location>
</feature>
<feature type="modified residue" description="Phosphoserine" evidence="38 40">
    <location>
        <position position="476"/>
    </location>
</feature>
<feature type="modified residue" description="Phosphoserine" evidence="40">
    <location>
        <position position="477"/>
    </location>
</feature>
<feature type="modified residue" description="Phosphoserine" evidence="33 37 38 40">
    <location>
        <position position="482"/>
    </location>
</feature>
<feature type="modified residue" description="Phosphothreonine" evidence="32 33 36 37 38 39">
    <location>
        <position position="592"/>
    </location>
</feature>
<feature type="modified residue" description="Phosphoserine" evidence="34 36 38 39">
    <location>
        <position position="792"/>
    </location>
</feature>
<feature type="modified residue" description="Phosphoserine" evidence="40">
    <location>
        <position position="810"/>
    </location>
</feature>
<feature type="modified residue" description="Phosphoserine" evidence="34 37 38">
    <location>
        <position position="812"/>
    </location>
</feature>
<feature type="modified residue" description="Phosphoserine" evidence="39">
    <location>
        <position position="816"/>
    </location>
</feature>
<feature type="cross-link" description="Glycyl lysine isopeptide (Lys-Gly) (interchain with G-Cter in ubiquitin)" evidence="21">
    <location>
        <position position="297"/>
    </location>
</feature>
<feature type="cross-link" description="Glycyl lysine isopeptide (Lys-Gly) (interchain with G-Cter in SUMO1)" evidence="41">
    <location>
        <position position="348"/>
    </location>
</feature>
<feature type="cross-link" description="Glycyl lysine isopeptide (Lys-Gly) (interchain with G-Cter in SUMO2)" evidence="42">
    <location>
        <position position="396"/>
    </location>
</feature>
<feature type="cross-link" description="Glycyl lysine isopeptide (Lys-Gly) (interchain with G-Cter in SUMO2)" evidence="42">
    <location>
        <position position="489"/>
    </location>
</feature>
<feature type="splice variant" id="VSP_003883" description="In isoform 4, isoform 6 and isoform 7." evidence="26 28 29">
    <original>E</original>
    <variation>ENVKQ</variation>
    <location>
        <position position="516"/>
    </location>
</feature>
<feature type="splice variant" id="VSP_003886" description="In isoform 5." evidence="26">
    <original>SQFY</original>
    <variation>TGFV</variation>
    <location>
        <begin position="687"/>
        <end position="690"/>
    </location>
</feature>
<feature type="splice variant" id="VSP_003888" description="In isoform 2 and isoform 6." evidence="23 25 26 27 28 29 30">
    <original>QFYSNGGHSGNASGG</original>
    <variation>DFFTDCYGYHDFGSS</variation>
    <location>
        <begin position="688"/>
        <end position="702"/>
    </location>
</feature>
<feature type="splice variant" id="VSP_003884" description="In isoform 4." evidence="26">
    <original>QFYSNGG</original>
    <variation>KCAFLSV</variation>
    <location>
        <begin position="688"/>
        <end position="694"/>
    </location>
</feature>
<feature type="splice variant" id="VSP_003890" description="In isoform 3." evidence="24 30">
    <original>YSNGGHSGNASGGGGGGGGGSSGYGSYYQGDNYNSPVPPKHAGKKQPHGGQQKPSYGSGYQSHQGQQQSYNQSPY</original>
    <variation>SRPPPPSRPRCCVVRCSGSPCGPSCDPYLAVFGTPCLQWFVSCHYNFVWVEFLSFCSSVSLCLFTLRVSGNSVCL</variation>
    <location>
        <begin position="690"/>
        <end position="764"/>
    </location>
</feature>
<feature type="splice variant" id="VSP_003887" description="In isoform 5." evidence="26">
    <location>
        <begin position="691"/>
        <end position="894"/>
    </location>
</feature>
<feature type="splice variant" id="VSP_003885" description="In isoform 4." evidence="26">
    <location>
        <begin position="695"/>
        <end position="894"/>
    </location>
</feature>
<feature type="splice variant" id="VSP_003889" description="In isoform 2 and isoform 6." evidence="23 25 26 27 28 29 30">
    <location>
        <begin position="703"/>
        <end position="894"/>
    </location>
</feature>
<feature type="splice variant" id="VSP_003891" description="In isoform 3." evidence="24 30">
    <location>
        <begin position="765"/>
        <end position="894"/>
    </location>
</feature>
<feature type="sequence variant" id="VAR_022159" description="In dbSNP:rs1064493." evidence="7">
    <original>D</original>
    <variation>H</variation>
    <location>
        <position position="50"/>
    </location>
</feature>
<feature type="sequence variant" id="VAR_048906" description="In dbSNP:rs34520379.">
    <original>A</original>
    <variation>S</variation>
    <location>
        <position position="501"/>
    </location>
</feature>
<feature type="sequence conflict" description="In Ref. 5; AAD51098/AAD51099 and 6; AAK07424/AAK07425." evidence="31" ref="5 6">
    <original>G</original>
    <variation>C</variation>
    <location>
        <position position="101"/>
    </location>
</feature>
<feature type="sequence conflict" description="In Ref. 2; AAD33966 and 11; CAA66918." evidence="31" ref="2 11">
    <original>G</original>
    <variation>V</variation>
    <location>
        <position position="260"/>
    </location>
</feature>
<feature type="sequence conflict" description="In Ref. 2; AAD33966 and 6; AAK07424/AAK07425." evidence="31" ref="2 6">
    <original>S</original>
    <variation>T</variation>
    <location>
        <position position="647"/>
    </location>
</feature>
<feature type="sequence conflict" description="In Ref. 13; AAF82687." evidence="31" ref="13">
    <original>QF</original>
    <variation>N</variation>
    <location>
        <begin position="688"/>
        <end position="689"/>
    </location>
</feature>
<feature type="sequence conflict" description="In Ref. 4; CAC01407." evidence="31" ref="4">
    <original>P</original>
    <variation>L</variation>
    <location>
        <position position="763"/>
    </location>
</feature>
<feature type="sequence conflict" description="In Ref. 4; CAC01124 and 6; AAK07425." evidence="31" ref="4 6">
    <original>G</original>
    <variation>R</variation>
    <location>
        <position position="797"/>
    </location>
</feature>
<feature type="sequence conflict" description="In Ref. 13; AAF82685." evidence="31" ref="13">
    <original>S</original>
    <variation>SGS</variation>
    <location>
        <position position="799"/>
    </location>
</feature>
<feature type="sequence conflict" description="In Ref. 6; AAK07425." evidence="31" ref="6">
    <original>G</original>
    <variation>E</variation>
    <location>
        <position position="813"/>
    </location>
</feature>
<feature type="helix" evidence="44">
    <location>
        <begin position="102"/>
        <end position="104"/>
    </location>
</feature>
<feature type="helix" evidence="43">
    <location>
        <begin position="528"/>
        <end position="535"/>
    </location>
</feature>
<feature type="strand" evidence="43">
    <location>
        <begin position="541"/>
        <end position="548"/>
    </location>
</feature>
<feature type="strand" evidence="43">
    <location>
        <begin position="554"/>
        <end position="561"/>
    </location>
</feature>
<feature type="strand" evidence="43">
    <location>
        <begin position="564"/>
        <end position="572"/>
    </location>
</feature>
<feature type="helix" evidence="43">
    <location>
        <begin position="573"/>
        <end position="588"/>
    </location>
</feature>
<feature type="modified residue" description="Phosphoserine" evidence="34 36">
    <location sequence="Q12906-4">
        <position position="482"/>
    </location>
</feature>
<feature type="modified residue" description="Phosphoserine" evidence="34 36">
    <location sequence="Q12906-6">
        <position position="482"/>
    </location>
</feature>
<feature type="modified residue" description="Phosphoserine" evidence="34 36">
    <location sequence="Q12906-7">
        <position position="482"/>
    </location>
</feature>
<evidence type="ECO:0000255" key="1"/>
<evidence type="ECO:0000255" key="2">
    <source>
        <dbReference type="PROSITE-ProRule" id="PRU00266"/>
    </source>
</evidence>
<evidence type="ECO:0000255" key="3">
    <source>
        <dbReference type="PROSITE-ProRule" id="PRU01040"/>
    </source>
</evidence>
<evidence type="ECO:0000256" key="4">
    <source>
        <dbReference type="SAM" id="MobiDB-lite"/>
    </source>
</evidence>
<evidence type="ECO:0000269" key="5">
    <source>
    </source>
</evidence>
<evidence type="ECO:0000269" key="6">
    <source>
    </source>
</evidence>
<evidence type="ECO:0000269" key="7">
    <source>
    </source>
</evidence>
<evidence type="ECO:0000269" key="8">
    <source>
    </source>
</evidence>
<evidence type="ECO:0000269" key="9">
    <source>
    </source>
</evidence>
<evidence type="ECO:0000269" key="10">
    <source>
    </source>
</evidence>
<evidence type="ECO:0000269" key="11">
    <source>
    </source>
</evidence>
<evidence type="ECO:0000269" key="12">
    <source>
    </source>
</evidence>
<evidence type="ECO:0000269" key="13">
    <source>
    </source>
</evidence>
<evidence type="ECO:0000269" key="14">
    <source>
    </source>
</evidence>
<evidence type="ECO:0000269" key="15">
    <source>
    </source>
</evidence>
<evidence type="ECO:0000269" key="16">
    <source>
    </source>
</evidence>
<evidence type="ECO:0000269" key="17">
    <source>
    </source>
</evidence>
<evidence type="ECO:0000269" key="18">
    <source>
    </source>
</evidence>
<evidence type="ECO:0000269" key="19">
    <source>
    </source>
</evidence>
<evidence type="ECO:0000269" key="20">
    <source>
    </source>
</evidence>
<evidence type="ECO:0000269" key="21">
    <source>
    </source>
</evidence>
<evidence type="ECO:0000269" key="22">
    <source>
    </source>
</evidence>
<evidence type="ECO:0000303" key="23">
    <source>
    </source>
</evidence>
<evidence type="ECO:0000303" key="24">
    <source>
    </source>
</evidence>
<evidence type="ECO:0000303" key="25">
    <source>
    </source>
</evidence>
<evidence type="ECO:0000303" key="26">
    <source>
    </source>
</evidence>
<evidence type="ECO:0000303" key="27">
    <source>
    </source>
</evidence>
<evidence type="ECO:0000303" key="28">
    <source>
    </source>
</evidence>
<evidence type="ECO:0000303" key="29">
    <source>
    </source>
</evidence>
<evidence type="ECO:0000303" key="30">
    <source ref="13"/>
</evidence>
<evidence type="ECO:0000305" key="31"/>
<evidence type="ECO:0007744" key="32">
    <source>
    </source>
</evidence>
<evidence type="ECO:0007744" key="33">
    <source>
    </source>
</evidence>
<evidence type="ECO:0007744" key="34">
    <source>
    </source>
</evidence>
<evidence type="ECO:0007744" key="35">
    <source>
    </source>
</evidence>
<evidence type="ECO:0007744" key="36">
    <source>
    </source>
</evidence>
<evidence type="ECO:0007744" key="37">
    <source>
    </source>
</evidence>
<evidence type="ECO:0007744" key="38">
    <source>
    </source>
</evidence>
<evidence type="ECO:0007744" key="39">
    <source>
    </source>
</evidence>
<evidence type="ECO:0007744" key="40">
    <source>
    </source>
</evidence>
<evidence type="ECO:0007744" key="41">
    <source>
    </source>
</evidence>
<evidence type="ECO:0007744" key="42">
    <source>
    </source>
</evidence>
<evidence type="ECO:0007829" key="43">
    <source>
        <dbReference type="PDB" id="3P1X"/>
    </source>
</evidence>
<evidence type="ECO:0007829" key="44">
    <source>
        <dbReference type="PDB" id="7RJQ"/>
    </source>
</evidence>
<reference key="1">
    <citation type="journal article" date="1994" name="J. Biol. Chem.">
        <title>Cloning and expression of cyclosporin A- and FK506-sensitive nuclear factor of activated T-cells: NF45 and NF90.</title>
        <authorList>
            <person name="Kao P.N."/>
            <person name="Chen L."/>
            <person name="Brock G."/>
            <person name="Ng J."/>
            <person name="Kenny J."/>
            <person name="Smith A.J."/>
            <person name="Corthesy B."/>
        </authorList>
    </citation>
    <scope>PRELIMINARY NUCLEOTIDE SEQUENCE [MRNA]</scope>
    <scope>PROTEIN SEQUENCE OF 19-41; 491-510 AND 555-565</scope>
    <source>
        <tissue>T-cell lymphoma</tissue>
    </source>
</reference>
<reference key="2">
    <citation type="journal article" date="1999" name="J. Biol. Chem.">
        <title>DRBP76, a double-stranded RNA-binding nuclear protein, is phosphorylated by the interferon-induced protein kinase, PKR.</title>
        <authorList>
            <person name="Patel R.C."/>
            <person name="Vestal D.J."/>
            <person name="Xu Z."/>
            <person name="Bandyopadhyay S."/>
            <person name="Guo W."/>
            <person name="Erme S.M."/>
            <person name="Williams B.R."/>
            <person name="Sen G.C."/>
        </authorList>
    </citation>
    <scope>NUCLEOTIDE SEQUENCE [MRNA] (ISOFORM 2)</scope>
    <scope>PROTEIN SEQUENCE OF N-TERMINUS</scope>
    <source>
        <tissue>Cervix carcinoma</tissue>
    </source>
</reference>
<reference key="3">
    <citation type="journal article" date="1999" name="Mol. Genet. Metab.">
        <title>Molecular cloning and characterization of a translational inhibitory protein that binds to coding sequences of human acid beta-glucosidase and other mRNAs.</title>
        <authorList>
            <person name="Xu Y.-H."/>
            <person name="Grabowski G.A."/>
        </authorList>
    </citation>
    <scope>NUCLEOTIDE SEQUENCE [MRNA] (ISOFORM 3)</scope>
    <scope>CHARACTERIZATION</scope>
    <source>
        <tissue>Liver</tissue>
    </source>
</reference>
<reference key="4">
    <citation type="journal article" date="2000" name="Gene">
        <title>Alternative splicing in the human interleukin enhancer binding factor 3 (ILF3) gene.</title>
        <authorList>
            <person name="Duchange N."/>
            <person name="Pidoux J."/>
            <person name="Camus E."/>
            <person name="Sauvaget D."/>
        </authorList>
    </citation>
    <scope>NUCLEOTIDE SEQUENCE [GENOMIC DNA / MRNA] (ISOFORMS 1; 2; 4 AND 5)</scope>
    <scope>ALTERNATIVE SPLICING</scope>
    <source>
        <tissue>Melanoma</tissue>
    </source>
</reference>
<reference key="5">
    <citation type="journal article" date="2001" name="J. Biol. Chem.">
        <title>Characterization of two evolutionarily conserved, alternatively spliced nuclear phosphoproteins, NFAR-1 and -2, that function in mRNA processing and interact with the double-stranded RNA-dependent protein kinase, PKR.</title>
        <authorList>
            <person name="Saunders L.R."/>
            <person name="Perkins D.J."/>
            <person name="Balachandran S."/>
            <person name="Michaels R."/>
            <person name="Ford R."/>
            <person name="Mayeda A."/>
            <person name="Barber G.N."/>
        </authorList>
    </citation>
    <scope>NUCLEOTIDE SEQUENCE [GENOMIC DNA / MRNA] (ISOFORMS 1 AND 2)</scope>
    <scope>CHARACTERIZATION</scope>
</reference>
<reference key="6">
    <citation type="journal article" date="2001" name="Genomics">
        <title>The 90- and 110-kDa human NFAR proteins are translated from two differentially spliced mRNAs encoded on chromosome 19p13.</title>
        <authorList>
            <person name="Saunders L.R."/>
            <person name="Jurecic V."/>
            <person name="Barber G.N."/>
        </authorList>
    </citation>
    <scope>NUCLEOTIDE SEQUENCE [GENOMIC DNA / MRNA] (ISOFORMS 1 AND 2)</scope>
    <scope>VARIANT HIS-50</scope>
    <source>
        <tissue>T-cell</tissue>
    </source>
</reference>
<reference key="7">
    <citation type="journal article" date="2004" name="Nat. Genet.">
        <title>Complete sequencing and characterization of 21,243 full-length human cDNAs.</title>
        <authorList>
            <person name="Ota T."/>
            <person name="Suzuki Y."/>
            <person name="Nishikawa T."/>
            <person name="Otsuki T."/>
            <person name="Sugiyama T."/>
            <person name="Irie R."/>
            <person name="Wakamatsu A."/>
            <person name="Hayashi K."/>
            <person name="Sato H."/>
            <person name="Nagai K."/>
            <person name="Kimura K."/>
            <person name="Makita H."/>
            <person name="Sekine M."/>
            <person name="Obayashi M."/>
            <person name="Nishi T."/>
            <person name="Shibahara T."/>
            <person name="Tanaka T."/>
            <person name="Ishii S."/>
            <person name="Yamamoto J."/>
            <person name="Saito K."/>
            <person name="Kawai Y."/>
            <person name="Isono Y."/>
            <person name="Nakamura Y."/>
            <person name="Nagahari K."/>
            <person name="Murakami K."/>
            <person name="Yasuda T."/>
            <person name="Iwayanagi T."/>
            <person name="Wagatsuma M."/>
            <person name="Shiratori A."/>
            <person name="Sudo H."/>
            <person name="Hosoiri T."/>
            <person name="Kaku Y."/>
            <person name="Kodaira H."/>
            <person name="Kondo H."/>
            <person name="Sugawara M."/>
            <person name="Takahashi M."/>
            <person name="Kanda K."/>
            <person name="Yokoi T."/>
            <person name="Furuya T."/>
            <person name="Kikkawa E."/>
            <person name="Omura Y."/>
            <person name="Abe K."/>
            <person name="Kamihara K."/>
            <person name="Katsuta N."/>
            <person name="Sato K."/>
            <person name="Tanikawa M."/>
            <person name="Yamazaki M."/>
            <person name="Ninomiya K."/>
            <person name="Ishibashi T."/>
            <person name="Yamashita H."/>
            <person name="Murakawa K."/>
            <person name="Fujimori K."/>
            <person name="Tanai H."/>
            <person name="Kimata M."/>
            <person name="Watanabe M."/>
            <person name="Hiraoka S."/>
            <person name="Chiba Y."/>
            <person name="Ishida S."/>
            <person name="Ono Y."/>
            <person name="Takiguchi S."/>
            <person name="Watanabe S."/>
            <person name="Yosida M."/>
            <person name="Hotuta T."/>
            <person name="Kusano J."/>
            <person name="Kanehori K."/>
            <person name="Takahashi-Fujii A."/>
            <person name="Hara H."/>
            <person name="Tanase T.-O."/>
            <person name="Nomura Y."/>
            <person name="Togiya S."/>
            <person name="Komai F."/>
            <person name="Hara R."/>
            <person name="Takeuchi K."/>
            <person name="Arita M."/>
            <person name="Imose N."/>
            <person name="Musashino K."/>
            <person name="Yuuki H."/>
            <person name="Oshima A."/>
            <person name="Sasaki N."/>
            <person name="Aotsuka S."/>
            <person name="Yoshikawa Y."/>
            <person name="Matsunawa H."/>
            <person name="Ichihara T."/>
            <person name="Shiohata N."/>
            <person name="Sano S."/>
            <person name="Moriya S."/>
            <person name="Momiyama H."/>
            <person name="Satoh N."/>
            <person name="Takami S."/>
            <person name="Terashima Y."/>
            <person name="Suzuki O."/>
            <person name="Nakagawa S."/>
            <person name="Senoh A."/>
            <person name="Mizoguchi H."/>
            <person name="Goto Y."/>
            <person name="Shimizu F."/>
            <person name="Wakebe H."/>
            <person name="Hishigaki H."/>
            <person name="Watanabe T."/>
            <person name="Sugiyama A."/>
            <person name="Takemoto M."/>
            <person name="Kawakami B."/>
            <person name="Yamazaki M."/>
            <person name="Watanabe K."/>
            <person name="Kumagai A."/>
            <person name="Itakura S."/>
            <person name="Fukuzumi Y."/>
            <person name="Fujimori Y."/>
            <person name="Komiyama M."/>
            <person name="Tashiro H."/>
            <person name="Tanigami A."/>
            <person name="Fujiwara T."/>
            <person name="Ono T."/>
            <person name="Yamada K."/>
            <person name="Fujii Y."/>
            <person name="Ozaki K."/>
            <person name="Hirao M."/>
            <person name="Ohmori Y."/>
            <person name="Kawabata A."/>
            <person name="Hikiji T."/>
            <person name="Kobatake N."/>
            <person name="Inagaki H."/>
            <person name="Ikema Y."/>
            <person name="Okamoto S."/>
            <person name="Okitani R."/>
            <person name="Kawakami T."/>
            <person name="Noguchi S."/>
            <person name="Itoh T."/>
            <person name="Shigeta K."/>
            <person name="Senba T."/>
            <person name="Matsumura K."/>
            <person name="Nakajima Y."/>
            <person name="Mizuno T."/>
            <person name="Morinaga M."/>
            <person name="Sasaki M."/>
            <person name="Togashi T."/>
            <person name="Oyama M."/>
            <person name="Hata H."/>
            <person name="Watanabe M."/>
            <person name="Komatsu T."/>
            <person name="Mizushima-Sugano J."/>
            <person name="Satoh T."/>
            <person name="Shirai Y."/>
            <person name="Takahashi Y."/>
            <person name="Nakagawa K."/>
            <person name="Okumura K."/>
            <person name="Nagase T."/>
            <person name="Nomura N."/>
            <person name="Kikuchi H."/>
            <person name="Masuho Y."/>
            <person name="Yamashita R."/>
            <person name="Nakai K."/>
            <person name="Yada T."/>
            <person name="Nakamura Y."/>
            <person name="Ohara O."/>
            <person name="Isogai T."/>
            <person name="Sugano S."/>
        </authorList>
    </citation>
    <scope>NUCLEOTIDE SEQUENCE [LARGE SCALE MRNA] (ISOFORM 6)</scope>
    <source>
        <tissue>Placenta</tissue>
    </source>
</reference>
<reference key="8">
    <citation type="journal article" date="2004" name="Nature">
        <title>The DNA sequence and biology of human chromosome 19.</title>
        <authorList>
            <person name="Grimwood J."/>
            <person name="Gordon L.A."/>
            <person name="Olsen A.S."/>
            <person name="Terry A."/>
            <person name="Schmutz J."/>
            <person name="Lamerdin J.E."/>
            <person name="Hellsten U."/>
            <person name="Goodstein D."/>
            <person name="Couronne O."/>
            <person name="Tran-Gyamfi M."/>
            <person name="Aerts A."/>
            <person name="Altherr M."/>
            <person name="Ashworth L."/>
            <person name="Bajorek E."/>
            <person name="Black S."/>
            <person name="Branscomb E."/>
            <person name="Caenepeel S."/>
            <person name="Carrano A.V."/>
            <person name="Caoile C."/>
            <person name="Chan Y.M."/>
            <person name="Christensen M."/>
            <person name="Cleland C.A."/>
            <person name="Copeland A."/>
            <person name="Dalin E."/>
            <person name="Dehal P."/>
            <person name="Denys M."/>
            <person name="Detter J.C."/>
            <person name="Escobar J."/>
            <person name="Flowers D."/>
            <person name="Fotopulos D."/>
            <person name="Garcia C."/>
            <person name="Georgescu A.M."/>
            <person name="Glavina T."/>
            <person name="Gomez M."/>
            <person name="Gonzales E."/>
            <person name="Groza M."/>
            <person name="Hammon N."/>
            <person name="Hawkins T."/>
            <person name="Haydu L."/>
            <person name="Ho I."/>
            <person name="Huang W."/>
            <person name="Israni S."/>
            <person name="Jett J."/>
            <person name="Kadner K."/>
            <person name="Kimball H."/>
            <person name="Kobayashi A."/>
            <person name="Larionov V."/>
            <person name="Leem S.-H."/>
            <person name="Lopez F."/>
            <person name="Lou Y."/>
            <person name="Lowry S."/>
            <person name="Malfatti S."/>
            <person name="Martinez D."/>
            <person name="McCready P.M."/>
            <person name="Medina C."/>
            <person name="Morgan J."/>
            <person name="Nelson K."/>
            <person name="Nolan M."/>
            <person name="Ovcharenko I."/>
            <person name="Pitluck S."/>
            <person name="Pollard M."/>
            <person name="Popkie A.P."/>
            <person name="Predki P."/>
            <person name="Quan G."/>
            <person name="Ramirez L."/>
            <person name="Rash S."/>
            <person name="Retterer J."/>
            <person name="Rodriguez A."/>
            <person name="Rogers S."/>
            <person name="Salamov A."/>
            <person name="Salazar A."/>
            <person name="She X."/>
            <person name="Smith D."/>
            <person name="Slezak T."/>
            <person name="Solovyev V."/>
            <person name="Thayer N."/>
            <person name="Tice H."/>
            <person name="Tsai M."/>
            <person name="Ustaszewska A."/>
            <person name="Vo N."/>
            <person name="Wagner M."/>
            <person name="Wheeler J."/>
            <person name="Wu K."/>
            <person name="Xie G."/>
            <person name="Yang J."/>
            <person name="Dubchak I."/>
            <person name="Furey T.S."/>
            <person name="DeJong P."/>
            <person name="Dickson M."/>
            <person name="Gordon D."/>
            <person name="Eichler E.E."/>
            <person name="Pennacchio L.A."/>
            <person name="Richardson P."/>
            <person name="Stubbs L."/>
            <person name="Rokhsar D.S."/>
            <person name="Myers R.M."/>
            <person name="Rubin E.M."/>
            <person name="Lucas S.M."/>
        </authorList>
    </citation>
    <scope>NUCLEOTIDE SEQUENCE [LARGE SCALE GENOMIC DNA]</scope>
</reference>
<reference key="9">
    <citation type="submission" date="2005-07" db="EMBL/GenBank/DDBJ databases">
        <authorList>
            <person name="Mural R.J."/>
            <person name="Istrail S."/>
            <person name="Sutton G.G."/>
            <person name="Florea L."/>
            <person name="Halpern A.L."/>
            <person name="Mobarry C.M."/>
            <person name="Lippert R."/>
            <person name="Walenz B."/>
            <person name="Shatkay H."/>
            <person name="Dew I."/>
            <person name="Miller J.R."/>
            <person name="Flanigan M.J."/>
            <person name="Edwards N.J."/>
            <person name="Bolanos R."/>
            <person name="Fasulo D."/>
            <person name="Halldorsson B.V."/>
            <person name="Hannenhalli S."/>
            <person name="Turner R."/>
            <person name="Yooseph S."/>
            <person name="Lu F."/>
            <person name="Nusskern D.R."/>
            <person name="Shue B.C."/>
            <person name="Zheng X.H."/>
            <person name="Zhong F."/>
            <person name="Delcher A.L."/>
            <person name="Huson D.H."/>
            <person name="Kravitz S.A."/>
            <person name="Mouchard L."/>
            <person name="Reinert K."/>
            <person name="Remington K.A."/>
            <person name="Clark A.G."/>
            <person name="Waterman M.S."/>
            <person name="Eichler E.E."/>
            <person name="Adams M.D."/>
            <person name="Hunkapiller M.W."/>
            <person name="Myers E.W."/>
            <person name="Venter J.C."/>
        </authorList>
    </citation>
    <scope>NUCLEOTIDE SEQUENCE [LARGE SCALE GENOMIC DNA]</scope>
</reference>
<reference key="10">
    <citation type="journal article" date="2004" name="Genome Res.">
        <title>The status, quality, and expansion of the NIH full-length cDNA project: the Mammalian Gene Collection (MGC).</title>
        <authorList>
            <consortium name="The MGC Project Team"/>
        </authorList>
    </citation>
    <scope>NUCLEOTIDE SEQUENCE [LARGE SCALE MRNA] (ISOFORM 6)</scope>
    <source>
        <tissue>Duodenum</tissue>
        <tissue>Uterus</tissue>
    </source>
</reference>
<reference key="11">
    <citation type="journal article" date="1996" name="Mol. Biol. Cell">
        <title>Identification of novel M phase phosphoproteins by expression cloning.</title>
        <authorList>
            <person name="Matsumoto-Taniura N."/>
            <person name="Pirollet F."/>
            <person name="Monroe R."/>
            <person name="Gerace L."/>
            <person name="Westendorf J.M."/>
        </authorList>
    </citation>
    <scope>NUCLEOTIDE SEQUENCE [MRNA] OF 1-611</scope>
    <source>
        <tissue>Blood</tissue>
        <tissue>Cervix</tissue>
    </source>
</reference>
<reference key="12">
    <citation type="journal article" date="1998" name="J. Biol. Chem.">
        <title>DNA-dependent protein kinase interacts with antigen receptor response element binding proteins NF90 and NF45.</title>
        <authorList>
            <person name="Ting N.S.Y."/>
            <person name="Kao P.N."/>
            <person name="Chan D.W."/>
            <person name="Lintott L.G."/>
            <person name="Lees-Miller S.P."/>
        </authorList>
    </citation>
    <scope>PROTEIN SEQUENCE OF 1-10</scope>
    <scope>FUNCTION</scope>
    <scope>INTERACTION WITH XRCC6; PRKDC AND XRCC5</scope>
</reference>
<reference key="13">
    <citation type="submission" date="1999-11" db="EMBL/GenBank/DDBJ databases">
        <title>Structure and functional characterization of hDRBF gene.</title>
        <authorList>
            <person name="MacArdle J."/>
            <person name="Cantarella G.M."/>
            <person name="Veyrune J.-L."/>
            <person name="Krasnoselskaya I."/>
            <person name="Kumar A."/>
        </authorList>
    </citation>
    <scope>NUCLEOTIDE SEQUENCE [MRNA] OF 188-894 (ISOFORMS 1; 2 AND 3)</scope>
</reference>
<reference key="14">
    <citation type="submission" date="1997-06" db="EMBL/GenBank/DDBJ databases">
        <authorList>
            <person name="Yu W."/>
            <person name="Sarginson J."/>
            <person name="Gibbs R.A."/>
        </authorList>
    </citation>
    <scope>NUCLEOTIDE SEQUENCE [LARGE SCALE MRNA] OF 587-894 (ISOFORM 1)</scope>
    <source>
        <tissue>Brain</tissue>
    </source>
</reference>
<reference key="15">
    <citation type="journal article" date="1999" name="J. Biol. Chem.">
        <title>Autoantibodies define a family of proteins with conserved double-stranded RNA-binding domains as well as DNA binding activity.</title>
        <authorList>
            <person name="Satoh M."/>
            <person name="Shaheen V.M."/>
            <person name="Kao P.N."/>
            <person name="Okano T."/>
            <person name="Shaw M."/>
            <person name="Yoshida H."/>
            <person name="Richards H.B."/>
            <person name="Reeves W.H."/>
        </authorList>
    </citation>
    <scope>INTERACTION WITH ILF2</scope>
</reference>
<reference key="16">
    <citation type="journal article" date="2000" name="J. Biol. Chem.">
        <title>Protein-arginine methyltransferase I, the predominant protein-arginine methyltransferase in cells, interacts with and is regulated by interleukin enhancer-binding factor 3.</title>
        <authorList>
            <person name="Tang J."/>
            <person name="Kao P.N."/>
            <person name="Herschman H.R."/>
        </authorList>
    </citation>
    <scope>INTERACTION WITH PRMT1</scope>
    <scope>SUBCELLULAR LOCATION</scope>
    <scope>METHYLATION</scope>
</reference>
<reference key="17">
    <citation type="journal article" date="2002" name="J. Cell Biol.">
        <title>Exportin-5, a novel karyopherin, mediates nuclear export of double-stranded RNA binding proteins.</title>
        <authorList>
            <person name="Brownawell A.M."/>
            <person name="Macara I.G."/>
        </authorList>
    </citation>
    <scope>IDENTIFICATION IN A NUCLEAR EXPORT RECEPTOR COMPLEX WITH XPO5; RAN AND DOUBLE-STRANDED RNA</scope>
    <scope>INTERACTION WITH XPO5</scope>
</reference>
<reference key="18">
    <citation type="journal article" date="2002" name="Mol. Biol. Cell">
        <title>Functional proteomic analysis of human nucleolus.</title>
        <authorList>
            <person name="Scherl A."/>
            <person name="Coute Y."/>
            <person name="Deon C."/>
            <person name="Calle A."/>
            <person name="Kindbeiter K."/>
            <person name="Sanchez J.-C."/>
            <person name="Greco A."/>
            <person name="Hochstrasser D.F."/>
            <person name="Diaz J.-J."/>
        </authorList>
    </citation>
    <scope>SUBCELLULAR LOCATION [LARGE SCALE ANALYSIS]</scope>
    <source>
        <tissue>Cervix carcinoma</tissue>
    </source>
</reference>
<reference key="19">
    <citation type="journal article" date="2002" name="Mol. Cell. Biol.">
        <title>The RNA binding protein nuclear factor 90 functions as both a positive and negative regulator of gene expression in mammalian cells.</title>
        <authorList>
            <person name="Reichman T.W."/>
            <person name="Muniz L.C."/>
            <person name="Mathews M.B."/>
        </authorList>
    </citation>
    <scope>INTERACTION WITH ILF2</scope>
</reference>
<reference key="20">
    <citation type="journal article" date="2004" name="J. Biol. Chem.">
        <title>Minihelix-containing RNAs mediate exportin-5-dependent nuclear export of the double-stranded RNA-binding protein ILF3.</title>
        <authorList>
            <person name="Gwizdek C."/>
            <person name="Ossareh-Nazari B."/>
            <person name="Brownawell A.M."/>
            <person name="Evers S."/>
            <person name="Macara I.G."/>
            <person name="Dargemont C."/>
        </authorList>
    </citation>
    <scope>IDENTIFICATION IN A NUCLEAR EXPORT RECEPTOR COMPLEX WITH XPO5; RAN AND VA1 RNA</scope>
</reference>
<reference key="21">
    <citation type="journal article" date="2004" name="Mol. Cell">
        <title>Facilitation of mRNA deadenylation and decay by the exosome-bound, DExH protein RHAU.</title>
        <authorList>
            <person name="Tran H."/>
            <person name="Schilling M."/>
            <person name="Wirbelauer C."/>
            <person name="Hess D."/>
            <person name="Nagamine Y."/>
        </authorList>
    </citation>
    <scope>FUNCTION</scope>
    <scope>INTERACTION WITH DHX36 AND ELAVL1</scope>
    <scope>IDENTIFICATION BY MASS SPECTROMETRY</scope>
</reference>
<reference key="22">
    <citation type="journal article" date="2004" name="Mol. Cell. Biol.">
        <title>Nucleocytoplasmic shuttling of JAZ, a new cargo protein for exportin-5.</title>
        <authorList>
            <person name="Chen T."/>
            <person name="Brownawell A.M."/>
            <person name="Macara I.G."/>
        </authorList>
    </citation>
    <scope>IDENTIFICATION IN A NUCLEAR EXPORT RECEPTOR COMPLEX WITH XPO5; RAN; ZNF346 AND DOUBLE-STRANDED RNA</scope>
    <scope>INTERACTION WITH XPO5 AND ZNF346</scope>
</reference>
<reference key="23">
    <citation type="journal article" date="2006" name="Cell">
        <title>Global, in vivo, and site-specific phosphorylation dynamics in signaling networks.</title>
        <authorList>
            <person name="Olsen J.V."/>
            <person name="Blagoev B."/>
            <person name="Gnad F."/>
            <person name="Macek B."/>
            <person name="Kumar C."/>
            <person name="Mortensen P."/>
            <person name="Mann M."/>
        </authorList>
    </citation>
    <scope>PHOSPHORYLATION [LARGE SCALE ANALYSIS] AT SER-482 AND THR-592</scope>
    <scope>IDENTIFICATION BY MASS SPECTROMETRY [LARGE SCALE ANALYSIS]</scope>
    <source>
        <tissue>Cervix carcinoma</tissue>
    </source>
</reference>
<reference key="24">
    <citation type="journal article" date="2006" name="Nat. Biotechnol.">
        <title>A probability-based approach for high-throughput protein phosphorylation analysis and site localization.</title>
        <authorList>
            <person name="Beausoleil S.A."/>
            <person name="Villen J."/>
            <person name="Gerber S.A."/>
            <person name="Rush J."/>
            <person name="Gygi S.P."/>
        </authorList>
    </citation>
    <scope>PHOSPHORYLATION [LARGE SCALE ANALYSIS] AT THR-592</scope>
    <scope>IDENTIFICATION BY MASS SPECTROMETRY [LARGE SCALE ANALYSIS]</scope>
    <source>
        <tissue>Cervix carcinoma</tissue>
    </source>
</reference>
<reference key="25">
    <citation type="journal article" date="2007" name="Biochim. Biophys. Acta">
        <title>The nuclear PP1 interacting protein ZAP3 (ZAP) is a putative nucleoside kinase that complexes with SAM68, CIA, NF110/45, and HNRNP-G.</title>
        <authorList>
            <person name="Ulke-Lemee A."/>
            <person name="Trinkle-Mulcahy L."/>
            <person name="Chaulk S."/>
            <person name="Bernstein N.K."/>
            <person name="Morrice N."/>
            <person name="Glover M."/>
            <person name="Lamond A.I."/>
            <person name="Moorhead G.B.G."/>
        </authorList>
    </citation>
    <scope>IDENTIFICATION IN A COMPLEX WITH ILF2; YLPM1; KHDRBS1; RBMX; NCOA5 AND PPP1CA</scope>
</reference>
<reference key="26">
    <citation type="journal article" date="2007" name="EMBO Rep.">
        <title>Proteomic and functional analysis of Argonaute-containing mRNA-protein complexes in human cells.</title>
        <authorList>
            <person name="Hoeck J."/>
            <person name="Weinmann L."/>
            <person name="Ender C."/>
            <person name="Ruedel S."/>
            <person name="Kremmer E."/>
            <person name="Raabe M."/>
            <person name="Urlaub H."/>
            <person name="Meister G."/>
        </authorList>
    </citation>
    <scope>INTERACTION WITH AGO1 AND AGO2</scope>
</reference>
<reference key="27">
    <citation type="journal article" date="2007" name="Mol. Cell. Proteomics">
        <title>Molecular composition of IMP1 ribonucleoprotein granules.</title>
        <authorList>
            <person name="Joeson L."/>
            <person name="Vikesaa J."/>
            <person name="Krogh A."/>
            <person name="Nielsen L.K."/>
            <person name="Hansen T."/>
            <person name="Borup R."/>
            <person name="Johnsen A.H."/>
            <person name="Christiansen J."/>
            <person name="Nielsen F.C."/>
        </authorList>
    </citation>
    <scope>IDENTIFICATION IN A MRNP GRANULE COMPLEX</scope>
    <scope>IDENTIFICATION BY MASS SPECTROMETRY</scope>
    <scope>SUBCELLULAR LOCATION</scope>
</reference>
<reference key="28">
    <citation type="journal article" date="2008" name="Proc. Natl. Acad. Sci. U.S.A.">
        <title>A quantitative atlas of mitotic phosphorylation.</title>
        <authorList>
            <person name="Dephoure N."/>
            <person name="Zhou C."/>
            <person name="Villen J."/>
            <person name="Beausoleil S.A."/>
            <person name="Bakalarski C.E."/>
            <person name="Elledge S.J."/>
            <person name="Gygi S.P."/>
        </authorList>
    </citation>
    <scope>PHOSPHORYLATION [LARGE SCALE ANALYSIS] AT SER-190; SER-792 AND SER-812</scope>
    <scope>PHOSPHORYLATION [LARGE SCALE ANALYSIS] AT SER-482 (ISOFORMS 4; 6 AND 7)</scope>
    <scope>IDENTIFICATION BY MASS SPECTROMETRY [LARGE SCALE ANALYSIS]</scope>
    <source>
        <tissue>Cervix carcinoma</tissue>
    </source>
</reference>
<reference key="29">
    <citation type="journal article" date="2009" name="Anal. Chem.">
        <title>Lys-N and trypsin cover complementary parts of the phosphoproteome in a refined SCX-based approach.</title>
        <authorList>
            <person name="Gauci S."/>
            <person name="Helbig A.O."/>
            <person name="Slijper M."/>
            <person name="Krijgsveld J."/>
            <person name="Heck A.J."/>
            <person name="Mohammed S."/>
        </authorList>
    </citation>
    <scope>IDENTIFICATION BY MASS SPECTROMETRY [LARGE SCALE ANALYSIS]</scope>
</reference>
<reference key="30">
    <citation type="journal article" date="2009" name="RNA">
        <title>Control of c-myc mRNA stability by IGF2BP1-associated cytoplasmic RNPs.</title>
        <authorList>
            <person name="Weidensdorfer D."/>
            <person name="Stoehr N."/>
            <person name="Baude A."/>
            <person name="Lederer M."/>
            <person name="Koehn M."/>
            <person name="Schierhorn A."/>
            <person name="Buchmeier S."/>
            <person name="Wahle E."/>
            <person name="Huettelmaiery S."/>
        </authorList>
    </citation>
    <scope>IDENTIFICATION IN A MRNP COMPLEX</scope>
    <scope>IDENTIFICATION BY MASS SPECTROMETRY</scope>
</reference>
<reference key="31">
    <citation type="journal article" date="2009" name="Sci. Signal.">
        <title>Quantitative phosphoproteomic analysis of T cell receptor signaling reveals system-wide modulation of protein-protein interactions.</title>
        <authorList>
            <person name="Mayya V."/>
            <person name="Lundgren D.H."/>
            <person name="Hwang S.-I."/>
            <person name="Rezaul K."/>
            <person name="Wu L."/>
            <person name="Eng J.K."/>
            <person name="Rodionov V."/>
            <person name="Han D.K."/>
        </authorList>
    </citation>
    <scope>PHOSPHORYLATION [LARGE SCALE ANALYSIS] AT THR-592 AND SER-792</scope>
    <scope>PHOSPHORYLATION [LARGE SCALE ANALYSIS] AT SER-482 (ISOFORMS 4; 6 AND 7)</scope>
    <scope>IDENTIFICATION BY MASS SPECTROMETRY [LARGE SCALE ANALYSIS]</scope>
    <source>
        <tissue>Leukemic T-cell</tissue>
    </source>
</reference>
<reference key="32">
    <citation type="journal article" date="2009" name="Science">
        <title>Lysine acetylation targets protein complexes and co-regulates major cellular functions.</title>
        <authorList>
            <person name="Choudhary C."/>
            <person name="Kumar C."/>
            <person name="Gnad F."/>
            <person name="Nielsen M.L."/>
            <person name="Rehman M."/>
            <person name="Walther T.C."/>
            <person name="Olsen J.V."/>
            <person name="Mann M."/>
        </authorList>
    </citation>
    <scope>ACETYLATION [LARGE SCALE ANALYSIS] AT LYS-100 AND LYS-460</scope>
    <scope>IDENTIFICATION BY MASS SPECTROMETRY [LARGE SCALE ANALYSIS]</scope>
</reference>
<reference key="33">
    <citation type="journal article" date="2010" name="Genes Dev.">
        <title>Phosphorylation of the NFAR proteins by the dsRNA-dependent protein kinase PKR constitutes a novel mechanism of translational regulation and cellular defense.</title>
        <authorList>
            <person name="Harashima A."/>
            <person name="Guettouche T."/>
            <person name="Barber G.N."/>
        </authorList>
    </citation>
    <scope>FUNCTION</scope>
    <scope>SUBCELLULAR LOCATION</scope>
    <scope>PHOSPHORYLATION AT THR-188 AND THR-315</scope>
</reference>
<reference key="34">
    <citation type="journal article" date="2010" name="Sci. Signal.">
        <title>Quantitative phosphoproteomics reveals widespread full phosphorylation site occupancy during mitosis.</title>
        <authorList>
            <person name="Olsen J.V."/>
            <person name="Vermeulen M."/>
            <person name="Santamaria A."/>
            <person name="Kumar C."/>
            <person name="Miller M.L."/>
            <person name="Jensen L.J."/>
            <person name="Gnad F."/>
            <person name="Cox J."/>
            <person name="Jensen T.S."/>
            <person name="Nigg E.A."/>
            <person name="Brunak S."/>
            <person name="Mann M."/>
        </authorList>
    </citation>
    <scope>PHOSPHORYLATION [LARGE SCALE ANALYSIS] AT SER-62; SER-190; SER-382; SER-384; SER-482; THR-592 AND SER-812</scope>
    <scope>IDENTIFICATION BY MASS SPECTROMETRY [LARGE SCALE ANALYSIS]</scope>
    <source>
        <tissue>Cervix carcinoma</tissue>
    </source>
</reference>
<reference key="35">
    <citation type="journal article" date="2011" name="BMC Syst. Biol.">
        <title>Initial characterization of the human central proteome.</title>
        <authorList>
            <person name="Burkard T.R."/>
            <person name="Planyavsky M."/>
            <person name="Kaupe I."/>
            <person name="Breitwieser F.P."/>
            <person name="Buerckstuemmer T."/>
            <person name="Bennett K.L."/>
            <person name="Superti-Furga G."/>
            <person name="Colinge J."/>
        </authorList>
    </citation>
    <scope>IDENTIFICATION BY MASS SPECTROMETRY [LARGE SCALE ANALYSIS]</scope>
</reference>
<reference key="36">
    <citation type="journal article" date="2011" name="Sci. Signal.">
        <title>System-wide temporal characterization of the proteome and phosphoproteome of human embryonic stem cell differentiation.</title>
        <authorList>
            <person name="Rigbolt K.T."/>
            <person name="Prokhorova T.A."/>
            <person name="Akimov V."/>
            <person name="Henningsen J."/>
            <person name="Johansen P.T."/>
            <person name="Kratchmarova I."/>
            <person name="Kassem M."/>
            <person name="Mann M."/>
            <person name="Olsen J.V."/>
            <person name="Blagoev B."/>
        </authorList>
    </citation>
    <scope>PHOSPHORYLATION [LARGE SCALE ANALYSIS] AT SER-62; SER-190; SER-382; SER-476; SER-482; THR-592; SER-792 AND SER-812</scope>
    <scope>IDENTIFICATION BY MASS SPECTROMETRY [LARGE SCALE ANALYSIS]</scope>
</reference>
<reference key="37">
    <citation type="journal article" date="2013" name="J. Proteome Res.">
        <title>Toward a comprehensive characterization of a human cancer cell phosphoproteome.</title>
        <authorList>
            <person name="Zhou H."/>
            <person name="Di Palma S."/>
            <person name="Preisinger C."/>
            <person name="Peng M."/>
            <person name="Polat A.N."/>
            <person name="Heck A.J."/>
            <person name="Mohammed S."/>
        </authorList>
    </citation>
    <scope>PHOSPHORYLATION [LARGE SCALE ANALYSIS] AT SER-62; SER-382; THR-592; SER-792 AND SER-816</scope>
    <scope>IDENTIFICATION BY MASS SPECTROMETRY [LARGE SCALE ANALYSIS]</scope>
    <source>
        <tissue>Cervix carcinoma</tissue>
        <tissue>Erythroleukemia</tissue>
    </source>
</reference>
<reference key="38">
    <citation type="journal article" date="2014" name="J. Proteomics">
        <title>An enzyme assisted RP-RPLC approach for in-depth analysis of human liver phosphoproteome.</title>
        <authorList>
            <person name="Bian Y."/>
            <person name="Song C."/>
            <person name="Cheng K."/>
            <person name="Dong M."/>
            <person name="Wang F."/>
            <person name="Huang J."/>
            <person name="Sun D."/>
            <person name="Wang L."/>
            <person name="Ye M."/>
            <person name="Zou H."/>
        </authorList>
    </citation>
    <scope>PHOSPHORYLATION [LARGE SCALE ANALYSIS] AT SER-62; SER-476; SER-477; SER-482 AND SER-810</scope>
    <scope>IDENTIFICATION BY MASS SPECTROMETRY [LARGE SCALE ANALYSIS]</scope>
    <source>
        <tissue>Liver</tissue>
    </source>
</reference>
<reference key="39">
    <citation type="journal article" date="2014" name="Proc. Natl. Acad. Sci. U.S.A.">
        <title>Mapping of SUMO sites and analysis of SUMOylation changes induced by external stimuli.</title>
        <authorList>
            <person name="Impens F."/>
            <person name="Radoshevich L."/>
            <person name="Cossart P."/>
            <person name="Ribet D."/>
        </authorList>
    </citation>
    <scope>SUMOYLATION [LARGE SCALE ANALYSIS] AT LYS-348</scope>
    <scope>IDENTIFICATION BY MASS SPECTROMETRY [LARGE SCALE ANALYSIS]</scope>
</reference>
<reference key="40">
    <citation type="journal article" date="2015" name="Mol. Cell. Biol.">
        <title>The NF45/NF90 Heterodimer Contributes to the Biogenesis of 60S Ribosomal Subunits and Influences Nucleolar Morphology.</title>
        <authorList>
            <person name="Wandrey F."/>
            <person name="Montellese C."/>
            <person name="Koos K."/>
            <person name="Badertscher L."/>
            <person name="Bammert L."/>
            <person name="Cook A.G."/>
            <person name="Zemp I."/>
            <person name="Horvath P."/>
            <person name="Kutay U."/>
        </authorList>
    </citation>
    <scope>SUBCELLULAR LOCATION</scope>
    <scope>INTERACTION WITH ILF2</scope>
</reference>
<reference key="41">
    <citation type="journal article" date="2016" name="Viruses">
        <title>NF45 and NF90 Bind HIV-1 RNA and Modulate HIV Gene Expression.</title>
        <authorList>
            <person name="Li Y."/>
            <person name="Belshan M."/>
        </authorList>
    </citation>
    <scope>FUNCTION (MICROBIAL INFECTION)</scope>
</reference>
<reference key="42">
    <citation type="journal article" date="2017" name="Mol. Cell">
        <title>Coordinated circRNA Biogenesis and Function with NF90/NF110 in Viral Infection.</title>
        <authorList>
            <person name="Li X."/>
            <person name="Liu C.X."/>
            <person name="Xue W."/>
            <person name="Zhang Y."/>
            <person name="Jiang S."/>
            <person name="Yin Q.F."/>
            <person name="Wei J."/>
            <person name="Yao R.W."/>
            <person name="Yang L."/>
            <person name="Chen L.L."/>
        </authorList>
    </citation>
    <scope>FUNCTION</scope>
    <scope>INTERACTION WITH ILF2</scope>
    <scope>SUBCELLULAR LOCATION</scope>
</reference>
<reference key="43">
    <citation type="journal article" date="2017" name="Nat. Struct. Mol. Biol.">
        <title>Site-specific mapping of the human SUMO proteome reveals co-modification with phosphorylation.</title>
        <authorList>
            <person name="Hendriks I.A."/>
            <person name="Lyon D."/>
            <person name="Young C."/>
            <person name="Jensen L.J."/>
            <person name="Vertegaal A.C."/>
            <person name="Nielsen M.L."/>
        </authorList>
    </citation>
    <scope>SUMOYLATION [LARGE SCALE ANALYSIS] AT LYS-396 AND LYS-489</scope>
    <scope>IDENTIFICATION BY MASS SPECTROMETRY [LARGE SCALE ANALYSIS]</scope>
</reference>
<reference key="44">
    <citation type="journal article" date="2021" name="Elife">
        <title>Ubiquitination and degradation of NF90 by Tim-3 inhibits antiviral innate immunity.</title>
        <authorList>
            <person name="Dou S."/>
            <person name="Li G."/>
            <person name="Li G."/>
            <person name="Hou C."/>
            <person name="Zheng Y."/>
            <person name="Tang L."/>
            <person name="Gao Y."/>
            <person name="Mo R."/>
            <person name="Li Y."/>
            <person name="Wang R."/>
            <person name="Shen B."/>
            <person name="Zhang J."/>
            <person name="Han G."/>
        </authorList>
    </citation>
    <scope>FUNCTION</scope>
    <scope>UBIQUITINATION AT LYS-297</scope>
    <scope>MUTAGENESIS OF LYS-297</scope>
    <scope>INTERACTION WITH HAVCR2</scope>
</reference>
<reference key="45">
    <citation type="submission" date="2010-12" db="PDB data bank">
        <title>Crystal structure of DRBM 2 domain of interleukin enhancer-binding factor 3 from Homo sapiens, Northeast structural genomics consortium target HR4527E.</title>
        <authorList>
            <consortium name="Northeast structural genomics consortium (NESG)"/>
        </authorList>
    </citation>
    <scope>X-RAY CRYSTALLOGRAPHY (1.9 ANGSTROMS) OF 520-594</scope>
</reference>
<reference key="46">
    <citation type="submission" date="2010-09" db="PDB data bank">
        <title>Northeast structural genomics consortium target HR4527E.</title>
        <authorList>
            <consortium name="Northeast structural genomics consortium (NESG)"/>
        </authorList>
    </citation>
    <scope>STRUCTURE BY NMR OF 521-600</scope>
</reference>
<proteinExistence type="evidence at protein level"/>
<keyword id="KW-0002">3D-structure</keyword>
<keyword id="KW-0007">Acetylation</keyword>
<keyword id="KW-0025">Alternative splicing</keyword>
<keyword id="KW-0051">Antiviral defense</keyword>
<keyword id="KW-0963">Cytoplasm</keyword>
<keyword id="KW-0903">Direct protein sequencing</keyword>
<keyword id="KW-0238">DNA-binding</keyword>
<keyword id="KW-1017">Isopeptide bond</keyword>
<keyword id="KW-0488">Methylation</keyword>
<keyword id="KW-0539">Nucleus</keyword>
<keyword id="KW-0597">Phosphoprotein</keyword>
<keyword id="KW-1267">Proteomics identification</keyword>
<keyword id="KW-1185">Reference proteome</keyword>
<keyword id="KW-0677">Repeat</keyword>
<keyword id="KW-0694">RNA-binding</keyword>
<keyword id="KW-0804">Transcription</keyword>
<keyword id="KW-0805">Transcription regulation</keyword>
<keyword id="KW-0832">Ubl conjugation</keyword>